<keyword id="KW-0002">3D-structure</keyword>
<keyword id="KW-0007">Acetylation</keyword>
<keyword id="KW-0143">Chaperone</keyword>
<keyword id="KW-0144">Charcot-Marie-Tooth disease</keyword>
<keyword id="KW-0963">Cytoplasm</keyword>
<keyword id="KW-0206">Cytoskeleton</keyword>
<keyword id="KW-0903">Direct protein sequencing</keyword>
<keyword id="KW-0225">Disease variant</keyword>
<keyword id="KW-0945">Host-virus interaction</keyword>
<keyword id="KW-0488">Methylation</keyword>
<keyword id="KW-0523">Neurodegeneration</keyword>
<keyword id="KW-0622">Neuropathy</keyword>
<keyword id="KW-0539">Nucleus</keyword>
<keyword id="KW-0597">Phosphoprotein</keyword>
<keyword id="KW-1267">Proteomics identification</keyword>
<keyword id="KW-1185">Reference proteome</keyword>
<keyword id="KW-0346">Stress response</keyword>
<organism>
    <name type="scientific">Homo sapiens</name>
    <name type="common">Human</name>
    <dbReference type="NCBI Taxonomy" id="9606"/>
    <lineage>
        <taxon>Eukaryota</taxon>
        <taxon>Metazoa</taxon>
        <taxon>Chordata</taxon>
        <taxon>Craniata</taxon>
        <taxon>Vertebrata</taxon>
        <taxon>Euteleostomi</taxon>
        <taxon>Mammalia</taxon>
        <taxon>Eutheria</taxon>
        <taxon>Euarchontoglires</taxon>
        <taxon>Primates</taxon>
        <taxon>Haplorrhini</taxon>
        <taxon>Catarrhini</taxon>
        <taxon>Hominidae</taxon>
        <taxon>Homo</taxon>
    </lineage>
</organism>
<feature type="chain" id="PRO_0000125927" description="Heat shock protein beta-1">
    <location>
        <begin position="1"/>
        <end position="205"/>
    </location>
</feature>
<feature type="domain" description="sHSP" evidence="3">
    <location>
        <begin position="76"/>
        <end position="184"/>
    </location>
</feature>
<feature type="region of interest" description="Interaction with TGFB1I1" evidence="1">
    <location>
        <begin position="70"/>
        <end position="205"/>
    </location>
</feature>
<feature type="modified residue" description="Omega-N-methylarginine" evidence="42">
    <location>
        <position position="12"/>
    </location>
</feature>
<feature type="modified residue" description="Phosphoserine; by MAPKAPK2 and MAPKAPK3" evidence="4 8 31 35 36 38 40 41 43">
    <location>
        <position position="15"/>
    </location>
</feature>
<feature type="modified residue" description="Phosphoserine" evidence="2">
    <location>
        <position position="26"/>
    </location>
</feature>
<feature type="modified residue" description="Phosphoserine" evidence="35 40">
    <location>
        <position position="65"/>
    </location>
</feature>
<feature type="modified residue" description="Phosphoserine; by MAPKAPK2, MAPKAPK3 and MAPKAPK5" evidence="4 8 11 13 16 31 40 41 43">
    <location>
        <position position="78"/>
    </location>
</feature>
<feature type="modified residue" description="Phosphoserine; by MAPKAPK2, MAPKAPK3 and MAPKAPK5" evidence="4 8 11 13 16 31 32 34 37 40 41 43">
    <location>
        <position position="82"/>
    </location>
</feature>
<feature type="modified residue" description="Phosphoserine" evidence="34">
    <location>
        <position position="83"/>
    </location>
</feature>
<feature type="modified residue" description="Phosphoserine" evidence="41 43">
    <location>
        <position position="86"/>
    </location>
</feature>
<feature type="modified residue" description="Phosphoserine" evidence="43">
    <location>
        <position position="98"/>
    </location>
</feature>
<feature type="modified residue" description="N6-acetyllysine" evidence="39">
    <location>
        <position position="123"/>
    </location>
</feature>
<feature type="modified residue" description="Phosphothreonine" evidence="41">
    <location>
        <position position="174"/>
    </location>
</feature>
<feature type="modified residue" description="Phosphoserine" evidence="41">
    <location>
        <position position="176"/>
    </location>
</feature>
<feature type="modified residue" description="Phosphoserine" evidence="37 38 40 41 43">
    <location>
        <position position="199"/>
    </location>
</feature>
<feature type="sequence variant" id="VAR_078128" description="In HMND3; induces hyperphosphorylation of neurofilaments; no effect on cytoplasmic location; no effect on dimerization; dbSNP:rs1563651698." evidence="28">
    <original>P</original>
    <variation>S</variation>
    <location>
        <position position="7"/>
    </location>
</feature>
<feature type="sequence variant" id="VAR_077483" description="In HMND3; increased aggregation; increased homooligomerization; changed function in chaperone-mediated protein folding; dbSNP:rs1554614432." evidence="20 25">
    <original>G</original>
    <variation>R</variation>
    <location>
        <position position="34"/>
    </location>
</feature>
<feature type="sequence variant" id="VAR_077484" description="In HMND3 and CMT2F; increased aggregation; increased homooligomerization; decreased phosphorylation by MAPKAPK2; changed function in chaperone-mediated protein folding; dbSNP:rs557327165." evidence="14 20 25 28">
    <original>P</original>
    <variation>L</variation>
    <location>
        <position position="39"/>
    </location>
</feature>
<feature type="sequence variant" id="VAR_077485" description="In HMND3; increased aggregation; increased homooligomerization; changed function in chaperone-mediated protein folding; dbSNP:rs1393404971." evidence="20 25">
    <original>E</original>
    <variation>K</variation>
    <location>
        <position position="41"/>
    </location>
</feature>
<feature type="sequence variant" id="VAR_078129" description="In HMND3; no effect on dimerization; no effect on cytoplasmic location; no effect on dimerization; dbSNP:rs375244209." evidence="28">
    <original>G</original>
    <variation>D</variation>
    <location>
        <position position="53"/>
    </location>
</feature>
<feature type="sequence variant" id="VAR_077486" description="In HMND3; decreased homooligomerization; decreased heterooligomerization with HSPB6; no effect on phosphorylation by MAPKAPK2; decreased function in chaperone-mediated protein folding; dbSNP:rs770272088." evidence="14 24">
    <original>G</original>
    <variation>R</variation>
    <location>
        <position position="84"/>
    </location>
</feature>
<feature type="sequence variant" id="VAR_077487" description="In HMND3; decreased homooligomerization; decreased heterooligomerization with HSPB6; no effect on phosphorylation by MAPKAPK2; decreased function in chaperone-mediated protein folding; dbSNP:rs121909113." evidence="14 24">
    <original>L</original>
    <variation>M</variation>
    <location>
        <position position="99"/>
    </location>
</feature>
<feature type="sequence variant" id="VAR_018506" description="In HMND3; decreased homodimerization; increased client proteins binding; increased function in chaperone-mediated protein folding; alters CDK5-mediated phosphorylation of neurofilament proteins and indirectly impairs their anterograde axonal transport; dbSNP:rs29001571." evidence="9 18 23 28">
    <original>R</original>
    <variation>W</variation>
    <location>
        <position position="127"/>
    </location>
</feature>
<feature type="sequence variant" id="VAR_078130" description="In HMND3; uncertain significance; no effect on dimerization; no effect on cytoplasmic location; no effect on dimerization; dbSNP:rs558882005." evidence="28">
    <original>Q</original>
    <variation>R</variation>
    <location>
        <position position="128"/>
    </location>
</feature>
<feature type="sequence variant" id="VAR_018507" description="In CMT2F and HMND3; decreased homodimerization; increased client proteins binding; increased function in chaperone-mediated protein folding; alters CDK5-mediated phosphorylation of neurofilament proteins; alters CDK5-mediated phosphorylation of neurofilament proteins and indirectly impairs their anterograde axonal transport; dbSNP:rs28939680." evidence="9 14 18 23">
    <original>S</original>
    <variation>F</variation>
    <location>
        <position position="135"/>
    </location>
</feature>
<feature type="sequence variant" id="VAR_077488" description="In CMT2F and HMND3; dbSNP:rs863225022." evidence="20">
    <original>R</original>
    <variation>L</variation>
    <location>
        <position position="136"/>
    </location>
</feature>
<feature type="sequence variant" id="VAR_018508" description="In CMT2F; decreased homodimerization only with the wild-type protein; increased client proteins binding; increased function in chaperone-mediated protein folding; dbSNP:rs28939681." evidence="9 18">
    <original>R</original>
    <variation>W</variation>
    <location>
        <position position="136"/>
    </location>
</feature>
<feature type="sequence variant" id="VAR_077489" description="In HMND3; decreased thermal stability; changed protein structure; changed homooligomerization; loss of heterooligomerization with HSPB6; decreased function in chaperone-mediated protein folding; dbSNP:rs121909112." evidence="14 22">
    <original>R</original>
    <variation>G</variation>
    <location>
        <position position="140"/>
    </location>
</feature>
<feature type="sequence variant" id="VAR_077490" description="In HMND3; decreased thermal stability; changed protein structure; no effect on homooligomerization; changed heterooligomerization with HSPB6; slightly decreased function in chaperone-mediated protein folding; dbSNP:rs1554614650." evidence="15 22">
    <original>K</original>
    <variation>Q</variation>
    <location>
        <position position="141"/>
    </location>
</feature>
<feature type="sequence variant" id="VAR_018509" description="In HMND3; no effect on homodimerization; no effect on client proteins binding; no effect on function in chaperone-mediated protein folding; dbSNP:rs28937568." evidence="9 18 28">
    <original>T</original>
    <variation>I</variation>
    <location>
        <position position="151"/>
    </location>
</feature>
<feature type="sequence variant" id="VAR_077491" description="No effect on oligomerization; no effect on client proteins binding; no effect on function in chaperone-mediated protein folding; dbSNP:rs374995963." evidence="18">
    <original>S</original>
    <variation>Y</variation>
    <location>
        <position position="156"/>
    </location>
</feature>
<feature type="sequence variant" id="VAR_067085" description="In CMT2F; dbSNP:rs1032400275." evidence="21">
    <original>T</original>
    <variation>A</variation>
    <location>
        <position position="164"/>
    </location>
</feature>
<feature type="sequence variant" id="VAR_078131" description="In HMND3." evidence="28">
    <location>
        <begin position="175"/>
        <end position="205"/>
    </location>
</feature>
<feature type="sequence variant" id="VAR_077492" description="In HMND3; uncertain significance; dbSNP:rs1422978230." evidence="19 20 28">
    <original>T</original>
    <variation>I</variation>
    <location>
        <position position="180"/>
    </location>
</feature>
<feature type="sequence variant" id="VAR_018510" description="In HMND3; decreased protein abundance; no effect on oligomerization; increased client proteins binding; no effect on function in chaperone-mediated protein folding; alters CDK5-mediated phosphorylation of neurofilament proteins; indirectly impairs their anterograde axonal transport; dbSNP:rs28937569." evidence="9 18 23">
    <original>P</original>
    <variation>L</variation>
    <location>
        <position position="182"/>
    </location>
</feature>
<feature type="sequence variant" id="VAR_078132" description="In HMND3; formation of large cytoplasmic aggregates; no effect on dimerization; dbSNP:rs774585320." evidence="28">
    <original>S</original>
    <variation>L</variation>
    <location>
        <position position="187"/>
    </location>
</feature>
<feature type="sequence variant" id="VAR_077493" description="In CMT2F; uncertain significance; dbSNP:rs772767500." evidence="20">
    <original>R</original>
    <variation>W</variation>
    <location>
        <position position="188"/>
    </location>
</feature>
<feature type="sequence variant" id="VAR_077494" description="Found in a patient with sporadic amyotrophic lateral sclerosis; uncertain significance; dbSNP:rs764297134." evidence="27">
    <original>Q</original>
    <variation>H</variation>
    <location>
        <position position="190"/>
    </location>
</feature>
<feature type="mutagenesis site" description="Mimicks phosphorylation state, leading to dreased ability to act as molecular chaperones; when associated with D-78 and D-82." evidence="4">
    <original>S</original>
    <variation>D</variation>
    <location>
        <position position="15"/>
    </location>
</feature>
<feature type="mutagenesis site" description="Mimicks phosphorylation state, leading to dreased ability to act as molecular chaperones; when associated with D-15 and D-82." evidence="4">
    <original>S</original>
    <variation>D</variation>
    <location>
        <position position="78"/>
    </location>
</feature>
<feature type="mutagenesis site" description="Mimicks phosphorylation state, leading to dreased ability to act as molecular chaperones; when associated with D-15 and D-78." evidence="4">
    <original>S</original>
    <variation>D</variation>
    <location>
        <position position="82"/>
    </location>
</feature>
<feature type="sequence conflict" description="In Ref. 13; AA sequence." evidence="33" ref="13">
    <original>L</original>
    <variation>I</variation>
    <location>
        <position position="10"/>
    </location>
</feature>
<feature type="sequence conflict" description="In Ref. 12; AAH12292." evidence="33" ref="12">
    <original>L</original>
    <variation>R</variation>
    <location>
        <position position="109"/>
    </location>
</feature>
<feature type="sequence conflict" description="In Ref. 12; AAH12292." evidence="33" ref="12">
    <original>T</original>
    <variation>S</variation>
    <location>
        <position position="121"/>
    </location>
</feature>
<feature type="sequence conflict" description="In Ref. 12; AAH12292." evidence="33" ref="12">
    <original>R</original>
    <variation>L</variation>
    <location>
        <position position="127"/>
    </location>
</feature>
<feature type="strand" evidence="46">
    <location>
        <begin position="86"/>
        <end position="88"/>
    </location>
</feature>
<feature type="strand" evidence="45">
    <location>
        <begin position="94"/>
        <end position="100"/>
    </location>
</feature>
<feature type="turn" evidence="45">
    <location>
        <begin position="102"/>
        <end position="104"/>
    </location>
</feature>
<feature type="strand" evidence="45">
    <location>
        <begin position="107"/>
        <end position="114"/>
    </location>
</feature>
<feature type="strand" evidence="45">
    <location>
        <begin position="117"/>
        <end position="124"/>
    </location>
</feature>
<feature type="strand" evidence="45">
    <location>
        <begin position="136"/>
        <end position="143"/>
    </location>
</feature>
<feature type="turn" evidence="44">
    <location>
        <begin position="145"/>
        <end position="147"/>
    </location>
</feature>
<feature type="helix" evidence="45">
    <location>
        <begin position="150"/>
        <end position="152"/>
    </location>
</feature>
<feature type="strand" evidence="45">
    <location>
        <begin position="154"/>
        <end position="157"/>
    </location>
</feature>
<feature type="strand" evidence="45">
    <location>
        <begin position="161"/>
        <end position="168"/>
    </location>
</feature>
<comment type="function">
    <text evidence="4 16 18 23">Small heat shock protein which functions as a molecular chaperone probably maintaining denatured proteins in a folding-competent state (PubMed:10383393, PubMed:20178975). Plays a role in stress resistance and actin organization (PubMed:19166925). Through its molecular chaperone activity may regulate numerous biological processes including the phosphorylation and the axonal transport of neurofilament proteins (PubMed:23728742).</text>
</comment>
<comment type="subunit">
    <text evidence="2 4 5 6 7 10 18 24">Homooligomer (PubMed:10383393). Homodimer; becomes monomeric upon activation (PubMed:20178975). Heterooligomer; with HSPB6 (PubMed:23948568). Associates with alpha- and beta-tubulin (PubMed:10777697). Interacts with TGFB1I1 (By similarity). Interacts with CRYAB (PubMed:1560006). Interacts with HSPB8 (PubMed:11342557). Interacts with HSPBAP1 (PubMed:10751411).</text>
</comment>
<comment type="interaction">
    <interactant intactId="EBI-352682">
        <id>P04792</id>
    </interactant>
    <interactant intactId="EBI-10173507">
        <id>Q6UY14-3</id>
        <label>ADAMTSL4</label>
    </interactant>
    <organismsDiffer>false</organismsDiffer>
    <experiments>3</experiments>
</comment>
<comment type="interaction">
    <interactant intactId="EBI-352682">
        <id>P04792</id>
    </interactant>
    <interactant intactId="EBI-25840993">
        <id>Q6ZTN6-2</id>
        <label>ANKRD13D</label>
    </interactant>
    <organismsDiffer>false</organismsDiffer>
    <experiments>3</experiments>
</comment>
<comment type="interaction">
    <interactant intactId="EBI-352682">
        <id>P04792</id>
    </interactant>
    <interactant intactId="EBI-21636328">
        <id>Q8N8A2-2</id>
        <label>ANKRD44</label>
    </interactant>
    <organismsDiffer>false</organismsDiffer>
    <experiments>3</experiments>
</comment>
<comment type="interaction">
    <interactant intactId="EBI-352682">
        <id>P04792</id>
    </interactant>
    <interactant intactId="EBI-762428">
        <id>Q92688</id>
        <label>ANP32B</label>
    </interactant>
    <organismsDiffer>false</organismsDiffer>
    <experiments>3</experiments>
</comment>
<comment type="interaction">
    <interactant intactId="EBI-352682">
        <id>P04792</id>
    </interactant>
    <interactant intactId="EBI-296601">
        <id>P08758</id>
        <label>ANXA5</label>
    </interactant>
    <organismsDiffer>false</organismsDiffer>
    <experiments>3</experiments>
</comment>
<comment type="interaction">
    <interactant intactId="EBI-352682">
        <id>P04792</id>
    </interactant>
    <interactant intactId="EBI-2556915">
        <id>P13928</id>
        <label>ANXA8</label>
    </interactant>
    <organismsDiffer>false</organismsDiffer>
    <experiments>3</experiments>
</comment>
<comment type="interaction">
    <interactant intactId="EBI-352682">
        <id>P04792</id>
    </interactant>
    <interactant intactId="EBI-77613">
        <id>P05067</id>
        <label>APP</label>
    </interactant>
    <organismsDiffer>false</organismsDiffer>
    <experiments>3</experiments>
</comment>
<comment type="interaction">
    <interactant intactId="EBI-352682">
        <id>P04792</id>
    </interactant>
    <interactant intactId="EBI-19124986">
        <id>O94778</id>
        <label>AQP8</label>
    </interactant>
    <organismsDiffer>false</organismsDiffer>
    <experiments>3</experiments>
</comment>
<comment type="interaction">
    <interactant intactId="EBI-352682">
        <id>P04792</id>
    </interactant>
    <interactant intactId="EBI-2875816">
        <id>Q9NP61</id>
        <label>ARFGAP3</label>
    </interactant>
    <organismsDiffer>false</organismsDiffer>
    <experiments>3</experiments>
</comment>
<comment type="interaction">
    <interactant intactId="EBI-352682">
        <id>P04792</id>
    </interactant>
    <interactant intactId="EBI-25844820">
        <id>Q86TN1</id>
        <label>ARNT2</label>
    </interactant>
    <organismsDiffer>false</organismsDiffer>
    <experiments>3</experiments>
</comment>
<comment type="interaction">
    <interactant intactId="EBI-352682">
        <id>P04792</id>
    </interactant>
    <interactant intactId="EBI-14199987">
        <id>Q9Y575-3</id>
        <label>ASB3</label>
    </interactant>
    <organismsDiffer>false</organismsDiffer>
    <experiments>3</experiments>
</comment>
<comment type="interaction">
    <interactant intactId="EBI-352682">
        <id>P04792</id>
    </interactant>
    <interactant intactId="EBI-10254793">
        <id>Q6XD76</id>
        <label>ASCL4</label>
    </interactant>
    <organismsDiffer>false</organismsDiffer>
    <experiments>3</experiments>
</comment>
<comment type="interaction">
    <interactant intactId="EBI-352682">
        <id>P04792</id>
    </interactant>
    <interactant intactId="EBI-9089489">
        <id>Q96FT7-4</id>
        <label>ASIC4</label>
    </interactant>
    <organismsDiffer>false</organismsDiffer>
    <experiments>3</experiments>
</comment>
<comment type="interaction">
    <interactant intactId="EBI-352682">
        <id>P04792</id>
    </interactant>
    <interactant intactId="EBI-2891281">
        <id>P15313</id>
        <label>ATP6V1B1</label>
    </interactant>
    <organismsDiffer>false</organismsDiffer>
    <experiments>3</experiments>
</comment>
<comment type="interaction">
    <interactant intactId="EBI-352682">
        <id>P04792</id>
    </interactant>
    <interactant intactId="EBI-747185">
        <id>O95817</id>
        <label>BAG3</label>
    </interactant>
    <organismsDiffer>false</organismsDiffer>
    <experiments>7</experiments>
</comment>
<comment type="interaction">
    <interactant intactId="EBI-352682">
        <id>P04792</id>
    </interactant>
    <interactant intactId="EBI-10988864">
        <id>P46379-2</id>
        <label>BAG6</label>
    </interactant>
    <organismsDiffer>false</organismsDiffer>
    <experiments>3</experiments>
</comment>
<comment type="interaction">
    <interactant intactId="EBI-352682">
        <id>P04792</id>
    </interactant>
    <interactant intactId="EBI-519866">
        <id>Q16611</id>
        <label>BAK1</label>
    </interactant>
    <organismsDiffer>false</organismsDiffer>
    <experiments>3</experiments>
</comment>
<comment type="interaction">
    <interactant intactId="EBI-352682">
        <id>P04792</id>
    </interactant>
    <interactant intactId="EBI-949378">
        <id>Q14457</id>
        <label>BECN1</label>
    </interactant>
    <organismsDiffer>false</organismsDiffer>
    <experiments>3</experiments>
</comment>
<comment type="interaction">
    <interactant intactId="EBI-352682">
        <id>P04792</id>
    </interactant>
    <interactant intactId="EBI-3919268">
        <id>Q96LC9</id>
        <label>BMF</label>
    </interactant>
    <organismsDiffer>false</organismsDiffer>
    <experiments>3</experiments>
</comment>
<comment type="interaction">
    <interactant intactId="EBI-352682">
        <id>P04792</id>
    </interactant>
    <interactant intactId="EBI-10693038">
        <id>Q9NSI6-4</id>
        <label>BRWD1</label>
    </interactant>
    <organismsDiffer>false</organismsDiffer>
    <experiments>3</experiments>
</comment>
<comment type="interaction">
    <interactant intactId="EBI-352682">
        <id>P04792</id>
    </interactant>
    <interactant intactId="EBI-25849710">
        <id>Q9H0W9-4</id>
        <label>C11orf54</label>
    </interactant>
    <organismsDiffer>false</organismsDiffer>
    <experiments>3</experiments>
</comment>
<comment type="interaction">
    <interactant intactId="EBI-352682">
        <id>P04792</id>
    </interactant>
    <interactant intactId="EBI-751596">
        <id>Q96LL4</id>
        <label>C8orf48</label>
    </interactant>
    <organismsDiffer>false</organismsDiffer>
    <experiments>3</experiments>
</comment>
<comment type="interaction">
    <interactant intactId="EBI-352682">
        <id>P04792</id>
    </interactant>
    <interactant intactId="EBI-1049597">
        <id>P27797</id>
        <label>CALR</label>
    </interactant>
    <organismsDiffer>false</organismsDiffer>
    <experiments>2</experiments>
</comment>
<comment type="interaction">
    <interactant intactId="EBI-352682">
        <id>P04792</id>
    </interactant>
    <interactant intactId="EBI-25850646">
        <id>Q8N5S9-2</id>
        <label>CAMKK1</label>
    </interactant>
    <organismsDiffer>false</organismsDiffer>
    <experiments>3</experiments>
</comment>
<comment type="interaction">
    <interactant intactId="EBI-352682">
        <id>P04792</id>
    </interactant>
    <interactant intactId="EBI-3915761">
        <id>Q9HC96</id>
        <label>CAPN10</label>
    </interactant>
    <organismsDiffer>false</organismsDiffer>
    <experiments>3</experiments>
</comment>
<comment type="interaction">
    <interactant intactId="EBI-352682">
        <id>P04792</id>
    </interactant>
    <interactant intactId="EBI-10181422">
        <id>A0A1B0GWI1</id>
        <label>CCDC196</label>
    </interactant>
    <organismsDiffer>false</organismsDiffer>
    <experiments>3</experiments>
</comment>
<comment type="interaction">
    <interactant intactId="EBI-352682">
        <id>P04792</id>
    </interactant>
    <interactant intactId="EBI-744045">
        <id>Q9Y3D0</id>
        <label>CIAO2B</label>
    </interactant>
    <organismsDiffer>false</organismsDiffer>
    <experiments>3</experiments>
</comment>
<comment type="interaction">
    <interactant intactId="EBI-352682">
        <id>P04792</id>
    </interactant>
    <interactant intactId="EBI-12823145">
        <id>Q96DZ5</id>
        <label>CLIP3</label>
    </interactant>
    <organismsDiffer>false</organismsDiffer>
    <experiments>3</experiments>
</comment>
<comment type="interaction">
    <interactant intactId="EBI-352682">
        <id>P04792</id>
    </interactant>
    <interactant intactId="EBI-25836090">
        <id>Q6PJW8-3</id>
        <label>CNST</label>
    </interactant>
    <organismsDiffer>false</organismsDiffer>
    <experiments>3</experiments>
</comment>
<comment type="interaction">
    <interactant intactId="EBI-352682">
        <id>P04792</id>
    </interactant>
    <interactant intactId="EBI-350590">
        <id>Q9UNS2</id>
        <label>COPS3</label>
    </interactant>
    <organismsDiffer>false</organismsDiffer>
    <experiments>3</experiments>
</comment>
<comment type="interaction">
    <interactant intactId="EBI-352682">
        <id>P04792</id>
    </interactant>
    <interactant intactId="EBI-2510162">
        <id>Q9H9Q2</id>
        <label>COPS7B</label>
    </interactant>
    <organismsDiffer>false</organismsDiffer>
    <experiments>3</experiments>
</comment>
<comment type="interaction">
    <interactant intactId="EBI-352682">
        <id>P04792</id>
    </interactant>
    <interactant intactId="EBI-2872414">
        <id>Q8IUI8</id>
        <label>CRLF3</label>
    </interactant>
    <organismsDiffer>false</organismsDiffer>
    <experiments>3</experiments>
</comment>
<comment type="interaction">
    <interactant intactId="EBI-352682">
        <id>P04792</id>
    </interactant>
    <interactant intactId="EBI-6875961">
        <id>P02489</id>
        <label>CRYAA</label>
    </interactant>
    <organismsDiffer>false</organismsDiffer>
    <experiments>6</experiments>
</comment>
<comment type="interaction">
    <interactant intactId="EBI-352682">
        <id>P04792</id>
    </interactant>
    <interactant intactId="EBI-739060">
        <id>P02511</id>
        <label>CRYAB</label>
    </interactant>
    <organismsDiffer>false</organismsDiffer>
    <experiments>7</experiments>
</comment>
<comment type="interaction">
    <interactant intactId="EBI-352682">
        <id>P04792</id>
    </interactant>
    <interactant intactId="EBI-724303">
        <id>P01040</id>
        <label>CSTA</label>
    </interactant>
    <organismsDiffer>false</organismsDiffer>
    <experiments>3</experiments>
</comment>
<comment type="interaction">
    <interactant intactId="EBI-352682">
        <id>P04792</id>
    </interactant>
    <interactant intactId="EBI-77321">
        <id>Q9UER7</id>
        <label>DAXX</label>
    </interactant>
    <organismsDiffer>false</organismsDiffer>
    <experiments>4</experiments>
</comment>
<comment type="interaction">
    <interactant intactId="EBI-352682">
        <id>P04792</id>
    </interactant>
    <interactant intactId="EBI-25842815">
        <id>Q5TAQ9-2</id>
        <label>DCAF8</label>
    </interactant>
    <organismsDiffer>false</organismsDiffer>
    <experiments>3</experiments>
</comment>
<comment type="interaction">
    <interactant intactId="EBI-352682">
        <id>P04792</id>
    </interactant>
    <interactant intactId="EBI-348253">
        <id>O00148</id>
        <label>DDX39A</label>
    </interactant>
    <organismsDiffer>false</organismsDiffer>
    <experiments>3</experiments>
</comment>
<comment type="interaction">
    <interactant intactId="EBI-352682">
        <id>P04792</id>
    </interactant>
    <interactant intactId="EBI-727171">
        <id>O00273</id>
        <label>DFFA</label>
    </interactant>
    <organismsDiffer>false</organismsDiffer>
    <experiments>2</experiments>
</comment>
<comment type="interaction">
    <interactant intactId="EBI-352682">
        <id>P04792</id>
    </interactant>
    <interactant intactId="EBI-25842538">
        <id>Q8NDP9</id>
        <label>DKFZp547K2416</label>
    </interactant>
    <organismsDiffer>false</organismsDiffer>
    <experiments>3</experiments>
</comment>
<comment type="interaction">
    <interactant intactId="EBI-352682">
        <id>P04792</id>
    </interactant>
    <interactant intactId="EBI-10694655">
        <id>Q7L591-3</id>
        <label>DOK3</label>
    </interactant>
    <organismsDiffer>false</organismsDiffer>
    <experiments>3</experiments>
</comment>
<comment type="interaction">
    <interactant intactId="EBI-352682">
        <id>P04792</id>
    </interactant>
    <interactant intactId="EBI-724653">
        <id>Q9BPU6</id>
        <label>DPYSL5</label>
    </interactant>
    <organismsDiffer>false</organismsDiffer>
    <experiments>3</experiments>
</comment>
<comment type="interaction">
    <interactant intactId="EBI-352682">
        <id>P04792</id>
    </interactant>
    <interactant intactId="EBI-372173">
        <id>O77932</id>
        <label>DXO</label>
    </interactant>
    <organismsDiffer>false</organismsDiffer>
    <experiments>3</experiments>
</comment>
<comment type="interaction">
    <interactant intactId="EBI-352682">
        <id>P04792</id>
    </interactant>
    <interactant intactId="EBI-357897">
        <id>Q15029</id>
        <label>EFTUD2</label>
    </interactant>
    <organismsDiffer>false</organismsDiffer>
    <experiments>2</experiments>
</comment>
<comment type="interaction">
    <interactant intactId="EBI-352682">
        <id>P04792</id>
    </interactant>
    <interactant intactId="EBI-711990">
        <id>O00303</id>
        <label>EIF3F</label>
    </interactant>
    <organismsDiffer>false</organismsDiffer>
    <experiments>3</experiments>
</comment>
<comment type="interaction">
    <interactant intactId="EBI-352682">
        <id>P04792</id>
    </interactant>
    <interactant intactId="EBI-73473">
        <id>Q14240</id>
        <label>EIF4A2</label>
    </interactant>
    <organismsDiffer>false</organismsDiffer>
    <experiments>2</experiments>
</comment>
<comment type="interaction">
    <interactant intactId="EBI-352682">
        <id>P04792</id>
    </interactant>
    <interactant intactId="EBI-296519">
        <id>P78344</id>
        <label>EIF4G2</label>
    </interactant>
    <organismsDiffer>false</organismsDiffer>
    <experiments>3</experiments>
</comment>
<comment type="interaction">
    <interactant intactId="EBI-352682">
        <id>P04792</id>
    </interactant>
    <interactant intactId="EBI-12920100">
        <id>Q6UXG2-3</id>
        <label>ELAPOR1</label>
    </interactant>
    <organismsDiffer>false</organismsDiffer>
    <experiments>3</experiments>
</comment>
<comment type="interaction">
    <interactant intactId="EBI-352682">
        <id>P04792</id>
    </interactant>
    <interactant intactId="EBI-10213520">
        <id>Q6NXG1</id>
        <label>ESRP1</label>
    </interactant>
    <organismsDiffer>false</organismsDiffer>
    <experiments>3</experiments>
</comment>
<comment type="interaction">
    <interactant intactId="EBI-352682">
        <id>P04792</id>
    </interactant>
    <interactant intactId="EBI-12902289">
        <id>Q6P587-2</id>
        <label>FAHD1</label>
    </interactant>
    <organismsDiffer>false</organismsDiffer>
    <experiments>3</experiments>
</comment>
<comment type="interaction">
    <interactant intactId="EBI-352682">
        <id>P04792</id>
    </interactant>
    <interactant intactId="EBI-3893327">
        <id>Q6P1L5</id>
        <label>FAM117B</label>
    </interactant>
    <organismsDiffer>false</organismsDiffer>
    <experiments>3</experiments>
</comment>
<comment type="interaction">
    <interactant intactId="EBI-352682">
        <id>P04792</id>
    </interactant>
    <interactant intactId="EBI-25835236">
        <id>Q49AJ0-4</id>
        <label>FAM135B</label>
    </interactant>
    <organismsDiffer>false</organismsDiffer>
    <experiments>3</experiments>
</comment>
<comment type="interaction">
    <interactant intactId="EBI-352682">
        <id>P04792</id>
    </interactant>
    <interactant intactId="EBI-11793142">
        <id>Q96GL9</id>
        <label>FAM163A</label>
    </interactant>
    <organismsDiffer>false</organismsDiffer>
    <experiments>3</experiments>
</comment>
<comment type="interaction">
    <interactant intactId="EBI-352682">
        <id>P04792</id>
    </interactant>
    <interactant intactId="EBI-5461838">
        <id>Q17RN3</id>
        <label>FAM98C</label>
    </interactant>
    <organismsDiffer>false</organismsDiffer>
    <experiments>3</experiments>
</comment>
<comment type="interaction">
    <interactant intactId="EBI-352682">
        <id>P04792</id>
    </interactant>
    <interactant intactId="EBI-8468186">
        <id>Q8IZU1</id>
        <label>FAM9A</label>
    </interactant>
    <organismsDiffer>false</organismsDiffer>
    <experiments>3</experiments>
</comment>
<comment type="interaction">
    <interactant intactId="EBI-352682">
        <id>P04792</id>
    </interactant>
    <interactant intactId="EBI-81610">
        <id>O15287</id>
        <label>FANCG</label>
    </interactant>
    <organismsDiffer>false</organismsDiffer>
    <experiments>3</experiments>
</comment>
<comment type="interaction">
    <interactant intactId="EBI-352682">
        <id>P04792</id>
    </interactant>
    <interactant intactId="EBI-21975404">
        <id>Q8TC84</id>
        <label>FANK1</label>
    </interactant>
    <organismsDiffer>false</organismsDiffer>
    <experiments>3</experiments>
</comment>
<comment type="interaction">
    <interactant intactId="EBI-352682">
        <id>P04792</id>
    </interactant>
    <interactant intactId="EBI-719781">
        <id>O00757</id>
        <label>FBP2</label>
    </interactant>
    <organismsDiffer>false</organismsDiffer>
    <experiments>3</experiments>
</comment>
<comment type="interaction">
    <interactant intactId="EBI-352682">
        <id>P04792</id>
    </interactant>
    <interactant intactId="EBI-1047444">
        <id>Q02790</id>
        <label>FKBP4</label>
    </interactant>
    <organismsDiffer>false</organismsDiffer>
    <experiments>2</experiments>
</comment>
<comment type="interaction">
    <interactant intactId="EBI-352682">
        <id>P04792</id>
    </interactant>
    <interactant intactId="EBI-713259">
        <id>P02794</id>
        <label>FTH1</label>
    </interactant>
    <organismsDiffer>false</organismsDiffer>
    <experiments>2</experiments>
</comment>
<comment type="interaction">
    <interactant intactId="EBI-352682">
        <id>P04792</id>
    </interactant>
    <interactant intactId="EBI-4289891">
        <id>P11413</id>
        <label>G6PD</label>
    </interactant>
    <organismsDiffer>false</organismsDiffer>
    <experiments>2</experiments>
</comment>
<comment type="interaction">
    <interactant intactId="EBI-352682">
        <id>P04792</id>
    </interactant>
    <interactant intactId="EBI-9090198">
        <id>P15976-2</id>
        <label>GATA1</label>
    </interactant>
    <organismsDiffer>false</organismsDiffer>
    <experiments>3</experiments>
</comment>
<comment type="interaction">
    <interactant intactId="EBI-352682">
        <id>P04792</id>
    </interactant>
    <interactant intactId="EBI-8799578">
        <id>Q9NXC2</id>
        <label>GFOD1</label>
    </interactant>
    <organismsDiffer>false</organismsDiffer>
    <experiments>3</experiments>
</comment>
<comment type="interaction">
    <interactant intactId="EBI-352682">
        <id>P04792</id>
    </interactant>
    <interactant intactId="EBI-22000587">
        <id>Q9HBQ8</id>
        <label>GOLGA2P5</label>
    </interactant>
    <organismsDiffer>false</organismsDiffer>
    <experiments>4</experiments>
</comment>
<comment type="interaction">
    <interactant intactId="EBI-352682">
        <id>P04792</id>
    </interactant>
    <interactant intactId="EBI-751540">
        <id>O95872</id>
        <label>GPANK1</label>
    </interactant>
    <organismsDiffer>false</organismsDiffer>
    <experiments>3</experiments>
</comment>
<comment type="interaction">
    <interactant intactId="EBI-352682">
        <id>P04792</id>
    </interactant>
    <interactant intactId="EBI-21649723">
        <id>Q7Z602</id>
        <label>GPR141</label>
    </interactant>
    <organismsDiffer>false</organismsDiffer>
    <experiments>3</experiments>
</comment>
<comment type="interaction">
    <interactant intactId="EBI-352682">
        <id>P04792</id>
    </interactant>
    <interactant intactId="EBI-347538">
        <id>Q9Y4H4</id>
        <label>GPSM3</label>
    </interactant>
    <organismsDiffer>false</organismsDiffer>
    <experiments>3</experiments>
</comment>
<comment type="interaction">
    <interactant intactId="EBI-352682">
        <id>P04792</id>
    </interactant>
    <interactant intactId="EBI-712083">
        <id>P78417</id>
        <label>GSTO1</label>
    </interactant>
    <organismsDiffer>false</organismsDiffer>
    <experiments>2</experiments>
</comment>
<comment type="interaction">
    <interactant intactId="EBI-352682">
        <id>P04792</id>
    </interactant>
    <interactant intactId="EBI-352682">
        <id>P04792</id>
        <label>HSPB1</label>
    </interactant>
    <organismsDiffer>false</organismsDiffer>
    <experiments>12</experiments>
</comment>
<comment type="interaction">
    <interactant intactId="EBI-352682">
        <id>P04792</id>
    </interactant>
    <interactant intactId="EBI-739074">
        <id>Q9UJY1</id>
        <label>HSPB8</label>
    </interactant>
    <organismsDiffer>false</organismsDiffer>
    <experiments>3</experiments>
</comment>
<comment type="interaction">
    <interactant intactId="EBI-352682">
        <id>P04792</id>
    </interactant>
    <interactant intactId="EBI-25835621">
        <id>Q96EW2-2</id>
        <label>HSPBAP1</label>
    </interactant>
    <organismsDiffer>false</organismsDiffer>
    <experiments>3</experiments>
</comment>
<comment type="interaction">
    <interactant intactId="EBI-352682">
        <id>P04792</id>
    </interactant>
    <interactant intactId="EBI-625934">
        <id>Q7Z6Z7</id>
        <label>HUWE1</label>
    </interactant>
    <organismsDiffer>false</organismsDiffer>
    <experiments>3</experiments>
</comment>
<comment type="interaction">
    <interactant intactId="EBI-352682">
        <id>P04792</id>
    </interactant>
    <interactant intactId="EBI-1055954">
        <id>P78318</id>
        <label>IGBP1</label>
    </interactant>
    <organismsDiffer>false</organismsDiffer>
    <experiments>3</experiments>
</comment>
<comment type="interaction">
    <interactant intactId="EBI-352682">
        <id>P04792</id>
    </interactant>
    <interactant intactId="EBI-17178971">
        <id>Q14005-2</id>
        <label>IL16</label>
    </interactant>
    <organismsDiffer>false</organismsDiffer>
    <experiments>3</experiments>
</comment>
<comment type="interaction">
    <interactant intactId="EBI-352682">
        <id>P04792</id>
    </interactant>
    <interactant intactId="EBI-743980">
        <id>Q9NXX0</id>
        <label>ILF3</label>
    </interactant>
    <organismsDiffer>false</organismsDiffer>
    <experiments>3</experiments>
</comment>
<comment type="interaction">
    <interactant intactId="EBI-352682">
        <id>P04792</id>
    </interactant>
    <interactant intactId="EBI-10220600">
        <id>Q8NA54</id>
        <label>IQUB</label>
    </interactant>
    <organismsDiffer>false</organismsDiffer>
    <experiments>3</experiments>
</comment>
<comment type="interaction">
    <interactant intactId="EBI-352682">
        <id>P04792</id>
    </interactant>
    <interactant intactId="EBI-25856470">
        <id>Q9UKP3-2</id>
        <label>ITGB1BP2</label>
    </interactant>
    <organismsDiffer>false</organismsDiffer>
    <experiments>3</experiments>
</comment>
<comment type="interaction">
    <interactant intactId="EBI-352682">
        <id>P04792</id>
    </interactant>
    <interactant intactId="EBI-9090173">
        <id>P0C870</id>
        <label>JMJD7</label>
    </interactant>
    <organismsDiffer>false</organismsDiffer>
    <experiments>3</experiments>
</comment>
<comment type="interaction">
    <interactant intactId="EBI-352682">
        <id>P04792</id>
    </interactant>
    <interactant intactId="EBI-25871195">
        <id>Q9NVX7-2</id>
        <label>KBTBD4</label>
    </interactant>
    <organismsDiffer>false</organismsDiffer>
    <experiments>3</experiments>
</comment>
<comment type="interaction">
    <interactant intactId="EBI-352682">
        <id>P04792</id>
    </interactant>
    <interactant intactId="EBI-742916">
        <id>Q8WZ19</id>
        <label>KCTD13</label>
    </interactant>
    <organismsDiffer>false</organismsDiffer>
    <experiments>3</experiments>
</comment>
<comment type="interaction">
    <interactant intactId="EBI-352682">
        <id>P04792</id>
    </interactant>
    <interactant intactId="EBI-12382297">
        <id>Q96SI1-2</id>
        <label>KCTD15</label>
    </interactant>
    <organismsDiffer>false</organismsDiffer>
    <experiments>3</experiments>
</comment>
<comment type="interaction">
    <interactant intactId="EBI-352682">
        <id>P04792</id>
    </interactant>
    <interactant intactId="EBI-3909166">
        <id>Q06136</id>
        <label>KDSR</label>
    </interactant>
    <organismsDiffer>false</organismsDiffer>
    <experiments>3</experiments>
</comment>
<comment type="interaction">
    <interactant intactId="EBI-352682">
        <id>P04792</id>
    </interactant>
    <interactant intactId="EBI-739493">
        <id>Q6ZU52</id>
        <label>KIAA0408</label>
    </interactant>
    <organismsDiffer>false</organismsDiffer>
    <experiments>3</experiments>
</comment>
<comment type="interaction">
    <interactant intactId="EBI-352682">
        <id>P04792</id>
    </interactant>
    <interactant intactId="EBI-2796400">
        <id>Q9UIH9</id>
        <label>KLF15</label>
    </interactant>
    <organismsDiffer>false</organismsDiffer>
    <experiments>3</experiments>
</comment>
<comment type="interaction">
    <interactant intactId="EBI-352682">
        <id>P04792</id>
    </interactant>
    <interactant intactId="EBI-8472267">
        <id>P57682</id>
        <label>KLF3</label>
    </interactant>
    <organismsDiffer>false</organismsDiffer>
    <experiments>3</experiments>
</comment>
<comment type="interaction">
    <interactant intactId="EBI-352682">
        <id>P04792</id>
    </interactant>
    <interactant intactId="EBI-714379">
        <id>Q9Y2M5</id>
        <label>KLHL20</label>
    </interactant>
    <organismsDiffer>false</organismsDiffer>
    <experiments>3</experiments>
</comment>
<comment type="interaction">
    <interactant intactId="EBI-352682">
        <id>P04792</id>
    </interactant>
    <interactant intactId="EBI-8473062">
        <id>Q8N1A0</id>
        <label>KRT222</label>
    </interactant>
    <organismsDiffer>false</organismsDiffer>
    <experiments>3</experiments>
</comment>
<comment type="interaction">
    <interactant intactId="EBI-352682">
        <id>P04792</id>
    </interactant>
    <interactant intactId="EBI-10241252">
        <id>Q3SY46</id>
        <label>KRTAP13-3</label>
    </interactant>
    <organismsDiffer>false</organismsDiffer>
    <experiments>3</experiments>
</comment>
<comment type="interaction">
    <interactant intactId="EBI-352682">
        <id>P04792</id>
    </interactant>
    <interactant intactId="EBI-10241353">
        <id>Q3SYF9</id>
        <label>KRTAP19-7</label>
    </interactant>
    <organismsDiffer>false</organismsDiffer>
    <experiments>3</experiments>
</comment>
<comment type="interaction">
    <interactant intactId="EBI-352682">
        <id>P04792</id>
    </interactant>
    <interactant intactId="EBI-10261141">
        <id>Q8IUC2</id>
        <label>KRTAP8-1</label>
    </interactant>
    <organismsDiffer>false</organismsDiffer>
    <experiments>3</experiments>
</comment>
<comment type="interaction">
    <interactant intactId="EBI-352682">
        <id>P04792</id>
    </interactant>
    <interactant intactId="EBI-9088686">
        <id>Q14847-2</id>
        <label>LASP1</label>
    </interactant>
    <organismsDiffer>false</organismsDiffer>
    <experiments>3</experiments>
</comment>
<comment type="interaction">
    <interactant intactId="EBI-352682">
        <id>P04792</id>
    </interactant>
    <interactant intactId="EBI-739546">
        <id>Q96PV6</id>
        <label>LENG8</label>
    </interactant>
    <organismsDiffer>false</organismsDiffer>
    <experiments>3</experiments>
</comment>
<comment type="interaction">
    <interactant intactId="EBI-352682">
        <id>P04792</id>
    </interactant>
    <interactant intactId="EBI-10258746">
        <id>Q9UPM6</id>
        <label>LHX6</label>
    </interactant>
    <organismsDiffer>false</organismsDiffer>
    <experiments>3</experiments>
</comment>
<comment type="interaction">
    <interactant intactId="EBI-352682">
        <id>P04792</id>
    </interactant>
    <interactant intactId="EBI-2340947">
        <id>Q8N448</id>
        <label>LNX2</label>
    </interactant>
    <organismsDiffer>false</organismsDiffer>
    <experiments>3</experiments>
</comment>
<comment type="interaction">
    <interactant intactId="EBI-352682">
        <id>P04792</id>
    </interactant>
    <interactant intactId="EBI-9088215">
        <id>A2RU56</id>
        <label>LOC401296</label>
    </interactant>
    <organismsDiffer>false</organismsDiffer>
    <experiments>3</experiments>
</comment>
<comment type="interaction">
    <interactant intactId="EBI-352682">
        <id>P04792</id>
    </interactant>
    <interactant intactId="EBI-749562">
        <id>Q96JB6</id>
        <label>LOXL4</label>
    </interactant>
    <organismsDiffer>false</organismsDiffer>
    <experiments>3</experiments>
</comment>
<comment type="interaction">
    <interactant intactId="EBI-352682">
        <id>P04792</id>
    </interactant>
    <interactant intactId="EBI-5278370">
        <id>Q14693</id>
        <label>LPIN1</label>
    </interactant>
    <organismsDiffer>false</organismsDiffer>
    <experiments>3</experiments>
</comment>
<comment type="interaction">
    <interactant intactId="EBI-352682">
        <id>P04792</id>
    </interactant>
    <interactant intactId="EBI-12056869">
        <id>Q9UDY8-2</id>
        <label>MALT1</label>
    </interactant>
    <organismsDiffer>false</organismsDiffer>
    <experiments>3</experiments>
</comment>
<comment type="interaction">
    <interactant intactId="EBI-352682">
        <id>P04792</id>
    </interactant>
    <interactant intactId="EBI-476263">
        <id>Q99683</id>
        <label>MAP3K5</label>
    </interactant>
    <organismsDiffer>false</organismsDiffer>
    <experiments>3</experiments>
</comment>
<comment type="interaction">
    <interactant intactId="EBI-352682">
        <id>P04792</id>
    </interactant>
    <interactant intactId="EBI-993299">
        <id>P49137</id>
        <label>MAPKAPK2</label>
    </interactant>
    <organismsDiffer>false</organismsDiffer>
    <experiments>3</experiments>
</comment>
<comment type="interaction">
    <interactant intactId="EBI-352682">
        <id>P04792</id>
    </interactant>
    <interactant intactId="EBI-1384657">
        <id>Q16644</id>
        <label>MAPKAPK3</label>
    </interactant>
    <organismsDiffer>false</organismsDiffer>
    <experiments>3</experiments>
</comment>
<comment type="interaction">
    <interactant intactId="EBI-352682">
        <id>P04792</id>
    </interactant>
    <interactant intactId="EBI-1201460">
        <id>Q8IW41</id>
        <label>MAPKAPK5</label>
    </interactant>
    <organismsDiffer>false</organismsDiffer>
    <experiments>2</experiments>
</comment>
<comment type="interaction">
    <interactant intactId="EBI-352682">
        <id>P04792</id>
    </interactant>
    <interactant intactId="EBI-25848049">
        <id>P61244-4</id>
        <label>MAX</label>
    </interactant>
    <organismsDiffer>false</organismsDiffer>
    <experiments>3</experiments>
</comment>
<comment type="interaction">
    <interactant intactId="EBI-352682">
        <id>P04792</id>
    </interactant>
    <interactant intactId="EBI-23820194">
        <id>Q03112-9</id>
        <label>MECOM</label>
    </interactant>
    <organismsDiffer>false</organismsDiffer>
    <experiments>3</experiments>
</comment>
<comment type="interaction">
    <interactant intactId="EBI-352682">
        <id>P04792</id>
    </interactant>
    <interactant intactId="EBI-1189067">
        <id>P51608</id>
        <label>MECP2</label>
    </interactant>
    <organismsDiffer>false</organismsDiffer>
    <experiments>3</experiments>
</comment>
<comment type="interaction">
    <interactant intactId="EBI-352682">
        <id>P04792</id>
    </interactant>
    <interactant intactId="EBI-8487781">
        <id>Q8N6F8</id>
        <label>METTL27</label>
    </interactant>
    <organismsDiffer>false</organismsDiffer>
    <experiments>3</experiments>
</comment>
<comment type="interaction">
    <interactant intactId="EBI-352682">
        <id>P04792</id>
    </interactant>
    <interactant intactId="EBI-8475277">
        <id>Q15049</id>
        <label>MLC1</label>
    </interactant>
    <organismsDiffer>false</organismsDiffer>
    <experiments>3</experiments>
</comment>
<comment type="interaction">
    <interactant intactId="EBI-352682">
        <id>P04792</id>
    </interactant>
    <interactant intactId="EBI-25835557">
        <id>A0A0A0MR05</id>
        <label>MLST8</label>
    </interactant>
    <organismsDiffer>false</organismsDiffer>
    <experiments>3</experiments>
</comment>
<comment type="interaction">
    <interactant intactId="EBI-352682">
        <id>P04792</id>
    </interactant>
    <interactant intactId="EBI-353759">
        <id>P08473</id>
        <label>MME</label>
    </interactant>
    <organismsDiffer>false</organismsDiffer>
    <experiments>4</experiments>
</comment>
<comment type="interaction">
    <interactant intactId="EBI-352682">
        <id>P04792</id>
    </interactant>
    <interactant intactId="EBI-2512452">
        <id>Q8N594</id>
        <label>MPND</label>
    </interactant>
    <organismsDiffer>false</organismsDiffer>
    <experiments>3</experiments>
</comment>
<comment type="interaction">
    <interactant intactId="EBI-352682">
        <id>P04792</id>
    </interactant>
    <interactant intactId="EBI-718177">
        <id>Q99608</id>
        <label>NDN</label>
    </interactant>
    <organismsDiffer>false</organismsDiffer>
    <experiments>3</experiments>
</comment>
<comment type="interaction">
    <interactant intactId="EBI-352682">
        <id>P04792</id>
    </interactant>
    <interactant intactId="EBI-718372">
        <id>Q8N5V2</id>
        <label>NGEF</label>
    </interactant>
    <organismsDiffer>false</organismsDiffer>
    <experiments>3</experiments>
</comment>
<comment type="interaction">
    <interactant intactId="EBI-352682">
        <id>P04792</id>
    </interactant>
    <interactant intactId="EBI-10697320">
        <id>Q8NBF2-2</id>
        <label>NHLRC2</label>
    </interactant>
    <organismsDiffer>false</organismsDiffer>
    <experiments>3</experiments>
</comment>
<comment type="interaction">
    <interactant intactId="EBI-352682">
        <id>P04792</id>
    </interactant>
    <interactant intactId="EBI-6144053">
        <id>Q14995</id>
        <label>NR1D2</label>
    </interactant>
    <organismsDiffer>false</organismsDiffer>
    <experiments>3</experiments>
</comment>
<comment type="interaction">
    <interactant intactId="EBI-352682">
        <id>P04792</id>
    </interactant>
    <interactant intactId="EBI-25834643">
        <id>P36639-4</id>
        <label>NUDT1</label>
    </interactant>
    <organismsDiffer>false</organismsDiffer>
    <experiments>3</experiments>
</comment>
<comment type="interaction">
    <interactant intactId="EBI-352682">
        <id>P04792</id>
    </interactant>
    <interactant intactId="EBI-4280066">
        <id>Q9NZJ9</id>
        <label>NUDT4</label>
    </interactant>
    <organismsDiffer>false</organismsDiffer>
    <experiments>3</experiments>
</comment>
<comment type="interaction">
    <interactant intactId="EBI-352682">
        <id>P04792</id>
    </interactant>
    <interactant intactId="EBI-18577082">
        <id>O15381-5</id>
        <label>NVL</label>
    </interactant>
    <organismsDiffer>false</organismsDiffer>
    <experiments>3</experiments>
</comment>
<comment type="interaction">
    <interactant intactId="EBI-352682">
        <id>P04792</id>
    </interactant>
    <interactant intactId="EBI-9090919">
        <id>Q5BJF6-2</id>
        <label>ODF2</label>
    </interactant>
    <organismsDiffer>false</organismsDiffer>
    <experiments>3</experiments>
</comment>
<comment type="interaction">
    <interactant intactId="EBI-352682">
        <id>P04792</id>
    </interactant>
    <interactant intactId="EBI-1058491">
        <id>Q96FW1</id>
        <label>OTUB1</label>
    </interactant>
    <organismsDiffer>false</organismsDiffer>
    <experiments>3</experiments>
</comment>
<comment type="interaction">
    <interactant intactId="EBI-352682">
        <id>P04792</id>
    </interactant>
    <interactant intactId="EBI-25830200">
        <id>Q6GQQ9-2</id>
        <label>OTUD7B</label>
    </interactant>
    <organismsDiffer>false</organismsDiffer>
    <experiments>3</experiments>
</comment>
<comment type="interaction">
    <interactant intactId="EBI-352682">
        <id>P04792</id>
    </interactant>
    <interactant intactId="EBI-2607770">
        <id>Q8N7H5</id>
        <label>PAF1</label>
    </interactant>
    <organismsDiffer>false</organismsDiffer>
    <experiments>2</experiments>
</comment>
<comment type="interaction">
    <interactant intactId="EBI-352682">
        <id>P04792</id>
    </interactant>
    <interactant intactId="EBI-1043580">
        <id>Q9BRX2</id>
        <label>PELO</label>
    </interactant>
    <organismsDiffer>false</organismsDiffer>
    <experiments>4</experiments>
</comment>
<comment type="interaction">
    <interactant intactId="EBI-352682">
        <id>P04792</id>
    </interactant>
    <interactant intactId="EBI-2557276">
        <id>O15534</id>
        <label>PER1</label>
    </interactant>
    <organismsDiffer>false</organismsDiffer>
    <experiments>3</experiments>
</comment>
<comment type="interaction">
    <interactant intactId="EBI-352682">
        <id>P04792</id>
    </interactant>
    <interactant intactId="EBI-17183069">
        <id>Q96FX8</id>
        <label>PERP</label>
    </interactant>
    <organismsDiffer>false</organismsDiffer>
    <experiments>3</experiments>
</comment>
<comment type="interaction">
    <interactant intactId="EBI-352682">
        <id>P04792</id>
    </interactant>
    <interactant intactId="EBI-12339509">
        <id>Q96LB9</id>
        <label>PGLYRP3</label>
    </interactant>
    <organismsDiffer>false</organismsDiffer>
    <experiments>3</experiments>
</comment>
<comment type="interaction">
    <interactant intactId="EBI-352682">
        <id>P04792</id>
    </interactant>
    <interactant intactId="EBI-4399372">
        <id>Q96G03</id>
        <label>PGM2</label>
    </interactant>
    <organismsDiffer>false</organismsDiffer>
    <experiments>2</experiments>
</comment>
<comment type="interaction">
    <interactant intactId="EBI-352682">
        <id>P04792</id>
    </interactant>
    <interactant intactId="EBI-629434">
        <id>O75925</id>
        <label>PIAS1</label>
    </interactant>
    <organismsDiffer>false</organismsDiffer>
    <experiments>3</experiments>
</comment>
<comment type="interaction">
    <interactant intactId="EBI-352682">
        <id>P04792</id>
    </interactant>
    <interactant intactId="EBI-12832742">
        <id>Q9UF11-2</id>
        <label>PLEKHB1</label>
    </interactant>
    <organismsDiffer>false</organismsDiffer>
    <experiments>3</experiments>
</comment>
<comment type="interaction">
    <interactant intactId="EBI-352682">
        <id>P04792</id>
    </interactant>
    <interactant intactId="EBI-21503705">
        <id>Q58EX7-2</id>
        <label>PLEKHG4</label>
    </interactant>
    <organismsDiffer>false</organismsDiffer>
    <experiments>3</experiments>
</comment>
<comment type="interaction">
    <interactant intactId="EBI-352682">
        <id>P04792</id>
    </interactant>
    <interactant intactId="EBI-12891828">
        <id>Q6ZR37</id>
        <label>PLEKHG7</label>
    </interactant>
    <organismsDiffer>false</organismsDiffer>
    <experiments>3</experiments>
</comment>
<comment type="interaction">
    <interactant intactId="EBI-352682">
        <id>P04792</id>
    </interactant>
    <interactant intactId="EBI-11751537">
        <id>Q8NA72-3</id>
        <label>POC5</label>
    </interactant>
    <organismsDiffer>false</organismsDiffer>
    <experiments>3</experiments>
</comment>
<comment type="interaction">
    <interactant intactId="EBI-352682">
        <id>P04792</id>
    </interactant>
    <interactant intactId="EBI-710067">
        <id>Q9H1D9</id>
        <label>POLR3F</label>
    </interactant>
    <organismsDiffer>false</organismsDiffer>
    <experiments>3</experiments>
</comment>
<comment type="interaction">
    <interactant intactId="EBI-352682">
        <id>P04792</id>
    </interactant>
    <interactant intactId="EBI-1053424">
        <id>O43741</id>
        <label>PRKAB2</label>
    </interactant>
    <organismsDiffer>false</organismsDiffer>
    <experiments>3</experiments>
</comment>
<comment type="interaction">
    <interactant intactId="EBI-352682">
        <id>P04792</id>
    </interactant>
    <interactant intactId="EBI-4290895">
        <id>P11908</id>
        <label>PRPS2</label>
    </interactant>
    <organismsDiffer>false</organismsDiffer>
    <experiments>3</experiments>
</comment>
<comment type="interaction">
    <interactant intactId="EBI-352682">
        <id>P04792</id>
    </interactant>
    <interactant intactId="EBI-743880">
        <id>Q8WUY3</id>
        <label>PRUNE2</label>
    </interactant>
    <organismsDiffer>false</organismsDiffer>
    <experiments>3</experiments>
</comment>
<comment type="interaction">
    <interactant intactId="EBI-352682">
        <id>P04792</id>
    </interactant>
    <interactant intactId="EBI-372312">
        <id>P28062-2</id>
        <label>PSMB8</label>
    </interactant>
    <organismsDiffer>false</organismsDiffer>
    <experiments>3</experiments>
</comment>
<comment type="interaction">
    <interactant intactId="EBI-352682">
        <id>P04792</id>
    </interactant>
    <interactant intactId="EBI-357669">
        <id>P62333</id>
        <label>PSMC6</label>
    </interactant>
    <organismsDiffer>false</organismsDiffer>
    <experiments>3</experiments>
</comment>
<comment type="interaction">
    <interactant intactId="EBI-352682">
        <id>P04792</id>
    </interactant>
    <interactant intactId="EBI-347462">
        <id>P47897</id>
        <label>QARS1</label>
    </interactant>
    <organismsDiffer>false</organismsDiffer>
    <experiments>3</experiments>
</comment>
<comment type="interaction">
    <interactant intactId="EBI-352682">
        <id>P04792</id>
    </interactant>
    <interactant intactId="EBI-4401730">
        <id>Q86YS6</id>
        <label>RAB43</label>
    </interactant>
    <organismsDiffer>false</organismsDiffer>
    <experiments>2</experiments>
</comment>
<comment type="interaction">
    <interactant intactId="EBI-352682">
        <id>P04792</id>
    </interactant>
    <interactant intactId="EBI-746228">
        <id>Q9Y5P3</id>
        <label>RAI2</label>
    </interactant>
    <organismsDiffer>false</organismsDiffer>
    <experiments>3</experiments>
</comment>
<comment type="interaction">
    <interactant intactId="EBI-352682">
        <id>P04792</id>
    </interactant>
    <interactant intactId="EBI-17589229">
        <id>Q6NTF9-3</id>
        <label>RHBDD2</label>
    </interactant>
    <organismsDiffer>false</organismsDiffer>
    <experiments>3</experiments>
</comment>
<comment type="interaction">
    <interactant intactId="EBI-352682">
        <id>P04792</id>
    </interactant>
    <interactant intactId="EBI-9027335">
        <id>Q8TDP1</id>
        <label>RNASEH2C</label>
    </interactant>
    <organismsDiffer>false</organismsDiffer>
    <experiments>3</experiments>
</comment>
<comment type="interaction">
    <interactant intactId="EBI-352682">
        <id>P04792</id>
    </interactant>
    <interactant intactId="EBI-714023">
        <id>Q8N5U6</id>
        <label>RNF10</label>
    </interactant>
    <organismsDiffer>false</organismsDiffer>
    <experiments>3</experiments>
</comment>
<comment type="interaction">
    <interactant intactId="EBI-352682">
        <id>P04792</id>
    </interactant>
    <interactant intactId="EBI-743938">
        <id>Q96D59</id>
        <label>RNF183</label>
    </interactant>
    <organismsDiffer>false</organismsDiffer>
    <experiments>3</experiments>
</comment>
<comment type="interaction">
    <interactant intactId="EBI-352682">
        <id>P04792</id>
    </interactant>
    <interactant intactId="EBI-347895">
        <id>P62244</id>
        <label>RPS15A</label>
    </interactant>
    <organismsDiffer>false</organismsDiffer>
    <experiments>3</experiments>
</comment>
<comment type="interaction">
    <interactant intactId="EBI-352682">
        <id>P04792</id>
    </interactant>
    <interactant intactId="EBI-357375">
        <id>P62979</id>
        <label>RPS27A</label>
    </interactant>
    <organismsDiffer>false</organismsDiffer>
    <experiments>3</experiments>
</comment>
<comment type="interaction">
    <interactant intactId="EBI-352682">
        <id>P04792</id>
    </interactant>
    <interactant intactId="EBI-354112">
        <id>P08865</id>
        <label>RPSA</label>
    </interactant>
    <organismsDiffer>false</organismsDiffer>
    <experiments>4</experiments>
</comment>
<comment type="interaction">
    <interactant intactId="EBI-352682">
        <id>P04792</id>
    </interactant>
    <interactant intactId="EBI-10248967">
        <id>Q66K80</id>
        <label>RUSC1-AS1</label>
    </interactant>
    <organismsDiffer>false</organismsDiffer>
    <experiments>3</experiments>
</comment>
<comment type="interaction">
    <interactant intactId="EBI-352682">
        <id>P04792</id>
    </interactant>
    <interactant intactId="EBI-11528848">
        <id>Q8N6K7-2</id>
        <label>SAMD3</label>
    </interactant>
    <organismsDiffer>false</organismsDiffer>
    <experiments>3</experiments>
</comment>
<comment type="interaction">
    <interactant intactId="EBI-352682">
        <id>P04792</id>
    </interactant>
    <interactant intactId="EBI-9089805">
        <id>Q9NTN9-3</id>
        <label>SEMA4G</label>
    </interactant>
    <organismsDiffer>false</organismsDiffer>
    <experiments>3</experiments>
</comment>
<comment type="interaction">
    <interactant intactId="EBI-352682">
        <id>P04792</id>
    </interactant>
    <interactant intactId="EBI-1051880">
        <id>Q12874</id>
        <label>SF3A3</label>
    </interactant>
    <organismsDiffer>false</organismsDiffer>
    <experiments>2</experiments>
</comment>
<comment type="interaction">
    <interactant intactId="EBI-352682">
        <id>P04792</id>
    </interactant>
    <interactant intactId="EBI-22000547">
        <id>Q9NUL5-3</id>
        <label>SHFL</label>
    </interactant>
    <organismsDiffer>false</organismsDiffer>
    <experiments>3</experiments>
</comment>
<comment type="interaction">
    <interactant intactId="EBI-352682">
        <id>P04792</id>
    </interactant>
    <interactant intactId="EBI-2560428">
        <id>Q8IYI0</id>
        <label>SHLD1</label>
    </interactant>
    <organismsDiffer>false</organismsDiffer>
    <experiments>3</experiments>
</comment>
<comment type="interaction">
    <interactant intactId="EBI-352682">
        <id>P04792</id>
    </interactant>
    <interactant intactId="EBI-12832276">
        <id>P08195-4</id>
        <label>SLC3A2</label>
    </interactant>
    <organismsDiffer>false</organismsDiffer>
    <experiments>3</experiments>
</comment>
<comment type="interaction">
    <interactant intactId="EBI-352682">
        <id>P04792</id>
    </interactant>
    <interactant intactId="EBI-25831241">
        <id>Q9NSD5-3</id>
        <label>SLC6A13</label>
    </interactant>
    <organismsDiffer>false</organismsDiffer>
    <experiments>3</experiments>
</comment>
<comment type="interaction">
    <interactant intactId="EBI-352682">
        <id>P04792</id>
    </interactant>
    <interactant intactId="EBI-1760638">
        <id>Q92966</id>
        <label>SNAPC3</label>
    </interactant>
    <organismsDiffer>false</organismsDiffer>
    <experiments>3</experiments>
</comment>
<comment type="interaction">
    <interactant intactId="EBI-352682">
        <id>P04792</id>
    </interactant>
    <interactant intactId="EBI-632715">
        <id>Q13573</id>
        <label>SNW1</label>
    </interactant>
    <organismsDiffer>false</organismsDiffer>
    <experiments>3</experiments>
</comment>
<comment type="interaction">
    <interactant intactId="EBI-352682">
        <id>P04792</id>
    </interactant>
    <interactant intactId="EBI-11959123">
        <id>Q99932-2</id>
        <label>SPAG8</label>
    </interactant>
    <organismsDiffer>false</organismsDiffer>
    <experiments>3</experiments>
</comment>
<comment type="interaction">
    <interactant intactId="EBI-352682">
        <id>P04792</id>
    </interactant>
    <interactant intactId="EBI-8635958">
        <id>Q6RVD6</id>
        <label>SPATA8</label>
    </interactant>
    <organismsDiffer>false</organismsDiffer>
    <experiments>3</experiments>
</comment>
<comment type="interaction">
    <interactant intactId="EBI-352682">
        <id>P04792</id>
    </interactant>
    <interactant intactId="EBI-727129">
        <id>Q9Y657</id>
        <label>SPIN1</label>
    </interactant>
    <organismsDiffer>false</organismsDiffer>
    <experiments>2</experiments>
</comment>
<comment type="interaction">
    <interactant intactId="EBI-352682">
        <id>P04792</id>
    </interactant>
    <interactant intactId="EBI-8345366">
        <id>Q8TCT7-2</id>
        <label>SPPL2B</label>
    </interactant>
    <organismsDiffer>false</organismsDiffer>
    <experiments>3</experiments>
</comment>
<comment type="interaction">
    <interactant intactId="EBI-352682">
        <id>P04792</id>
    </interactant>
    <interactant intactId="EBI-354861">
        <id>Q9C004</id>
        <label>SPRY4</label>
    </interactant>
    <organismsDiffer>false</organismsDiffer>
    <experiments>3</experiments>
</comment>
<comment type="interaction">
    <interactant intactId="EBI-352682">
        <id>P04792</id>
    </interactant>
    <interactant intactId="EBI-18616594">
        <id>Q8IXS7</id>
        <label>SRGAP3</label>
    </interactant>
    <organismsDiffer>false</organismsDiffer>
    <experiments>3</experiments>
</comment>
<comment type="interaction">
    <interactant intactId="EBI-352682">
        <id>P04792</id>
    </interactant>
    <interactant intactId="EBI-357085">
        <id>Q9UNE7</id>
        <label>STUB1</label>
    </interactant>
    <organismsDiffer>false</organismsDiffer>
    <experiments>4</experiments>
</comment>
<comment type="interaction">
    <interactant intactId="EBI-352682">
        <id>P04792</id>
    </interactant>
    <interactant intactId="EBI-723091">
        <id>Q8NBJ7</id>
        <label>SUMF2</label>
    </interactant>
    <organismsDiffer>false</organismsDiffer>
    <experiments>3</experiments>
</comment>
<comment type="interaction">
    <interactant intactId="EBI-352682">
        <id>P04792</id>
    </interactant>
    <interactant intactId="EBI-25861603">
        <id>Q17RD7-3</id>
        <label>SYT16</label>
    </interactant>
    <organismsDiffer>false</organismsDiffer>
    <experiments>3</experiments>
</comment>
<comment type="interaction">
    <interactant intactId="EBI-352682">
        <id>P04792</id>
    </interactant>
    <interactant intactId="EBI-745958">
        <id>Q5VWN6</id>
        <label>TASOR2</label>
    </interactant>
    <organismsDiffer>false</organismsDiffer>
    <experiments>3</experiments>
</comment>
<comment type="interaction">
    <interactant intactId="EBI-352682">
        <id>P04792</id>
    </interactant>
    <interactant intactId="EBI-2116184">
        <id>Q8IYN2</id>
        <label>TCEAL8</label>
    </interactant>
    <organismsDiffer>false</organismsDiffer>
    <experiments>3</experiments>
</comment>
<comment type="interaction">
    <interactant intactId="EBI-352682">
        <id>P04792</id>
    </interactant>
    <interactant intactId="EBI-348333">
        <id>Q13569</id>
        <label>TDG</label>
    </interactant>
    <organismsDiffer>false</organismsDiffer>
    <experiments>3</experiments>
</comment>
<comment type="interaction">
    <interactant intactId="EBI-352682">
        <id>P04792</id>
    </interactant>
    <interactant intactId="EBI-2562799">
        <id>Q86WV5</id>
        <label>TEN1</label>
    </interactant>
    <organismsDiffer>false</organismsDiffer>
    <experiments>3</experiments>
</comment>
<comment type="interaction">
    <interactant intactId="EBI-352682">
        <id>P04792</id>
    </interactant>
    <interactant intactId="EBI-752030">
        <id>Q96A09</id>
        <label>TENT5B</label>
    </interactant>
    <organismsDiffer>false</organismsDiffer>
    <experiments>3</experiments>
</comment>
<comment type="interaction">
    <interactant intactId="EBI-352682">
        <id>P04792</id>
    </interactant>
    <interactant intactId="EBI-25842075">
        <id>P21980-2</id>
        <label>TGM2</label>
    </interactant>
    <organismsDiffer>false</organismsDiffer>
    <experiments>3</experiments>
</comment>
<comment type="interaction">
    <interactant intactId="EBI-352682">
        <id>P04792</id>
    </interactant>
    <interactant intactId="EBI-2372529">
        <id>O60830</id>
        <label>TIMM17B</label>
    </interactant>
    <organismsDiffer>false</organismsDiffer>
    <experiments>3</experiments>
</comment>
<comment type="interaction">
    <interactant intactId="EBI-352682">
        <id>P04792</id>
    </interactant>
    <interactant intactId="EBI-25871541">
        <id>A0AVI4-2</id>
        <label>TMEM129</label>
    </interactant>
    <organismsDiffer>false</organismsDiffer>
    <experiments>3</experiments>
</comment>
<comment type="interaction">
    <interactant intactId="EBI-352682">
        <id>P04792</id>
    </interactant>
    <interactant intactId="EBI-10242677">
        <id>Q53NU3</id>
        <label>tmp_locus_54</label>
    </interactant>
    <organismsDiffer>false</organismsDiffer>
    <experiments>3</experiments>
</comment>
<comment type="interaction">
    <interactant intactId="EBI-352682">
        <id>P04792</id>
    </interactant>
    <interactant intactId="EBI-9089156">
        <id>Q8IUR5-4</id>
        <label>TMTC1</label>
    </interactant>
    <organismsDiffer>false</organismsDiffer>
    <experiments>3</experiments>
</comment>
<comment type="interaction">
    <interactant intactId="EBI-352682">
        <id>P04792</id>
    </interactant>
    <interactant intactId="EBI-25831574">
        <id>Q71RG4-4</id>
        <label>TMUB2</label>
    </interactant>
    <organismsDiffer>false</organismsDiffer>
    <experiments>3</experiments>
</comment>
<comment type="interaction">
    <interactant intactId="EBI-352682">
        <id>P04792</id>
    </interactant>
    <interactant intactId="EBI-366083">
        <id>P04637</id>
        <label>TP53</label>
    </interactant>
    <organismsDiffer>false</organismsDiffer>
    <experiments>3</experiments>
</comment>
<comment type="interaction">
    <interactant intactId="EBI-352682">
        <id>P04792</id>
    </interactant>
    <interactant intactId="EBI-1783169">
        <id>P13693</id>
        <label>TPT1</label>
    </interactant>
    <organismsDiffer>false</organismsDiffer>
    <experiments>2</experiments>
</comment>
<comment type="interaction">
    <interactant intactId="EBI-352682">
        <id>P04792</id>
    </interactant>
    <interactant intactId="EBI-740098">
        <id>P36406</id>
        <label>TRIM23</label>
    </interactant>
    <organismsDiffer>false</organismsDiffer>
    <experiments>3</experiments>
</comment>
<comment type="interaction">
    <interactant intactId="EBI-352682">
        <id>P04792</id>
    </interactant>
    <interactant intactId="EBI-12806590">
        <id>Q86WV8</id>
        <label>TSC1</label>
    </interactant>
    <organismsDiffer>false</organismsDiffer>
    <experiments>3</experiments>
</comment>
<comment type="interaction">
    <interactant intactId="EBI-352682">
        <id>P04792</id>
    </interactant>
    <interactant intactId="EBI-739485">
        <id>Q9Y3Q8</id>
        <label>TSC22D4</label>
    </interactant>
    <organismsDiffer>false</organismsDiffer>
    <experiments>3</experiments>
</comment>
<comment type="interaction">
    <interactant intactId="EBI-352682">
        <id>P04792</id>
    </interactant>
    <interactant intactId="EBI-742074">
        <id>Q99614</id>
        <label>TTC1</label>
    </interactant>
    <organismsDiffer>false</organismsDiffer>
    <experiments>3</experiments>
</comment>
<comment type="interaction">
    <interactant intactId="EBI-352682">
        <id>P04792</id>
    </interactant>
    <interactant intactId="EBI-356735">
        <id>Q9BUF5</id>
        <label>TUBB6</label>
    </interactant>
    <organismsDiffer>false</organismsDiffer>
    <experiments>3</experiments>
</comment>
<comment type="interaction">
    <interactant intactId="EBI-352682">
        <id>P04792</id>
    </interactant>
    <interactant intactId="EBI-9088812">
        <id>Q5VYS8-5</id>
        <label>TUT7</label>
    </interactant>
    <organismsDiffer>false</organismsDiffer>
    <experiments>3</experiments>
</comment>
<comment type="interaction">
    <interactant intactId="EBI-352682">
        <id>P04792</id>
    </interactant>
    <interactant intactId="EBI-25840976">
        <id>Q8NBM4-4</id>
        <label>UBAC2</label>
    </interactant>
    <organismsDiffer>false</organismsDiffer>
    <experiments>3</experiments>
</comment>
<comment type="interaction">
    <interactant intactId="EBI-352682">
        <id>P04792</id>
    </interactant>
    <interactant intactId="EBI-348496">
        <id>Q969T4</id>
        <label>UBE2E3</label>
    </interactant>
    <organismsDiffer>false</organismsDiffer>
    <experiments>3</experiments>
</comment>
<comment type="interaction">
    <interactant intactId="EBI-352682">
        <id>P04792</id>
    </interactant>
    <interactant intactId="EBI-2130157">
        <id>Q8WVN8</id>
        <label>UBE2Q2</label>
    </interactant>
    <organismsDiffer>false</organismsDiffer>
    <experiments>3</experiments>
</comment>
<comment type="interaction">
    <interactant intactId="EBI-352682">
        <id>P04792</id>
    </interactant>
    <interactant intactId="EBI-11530712">
        <id>Q04323-2</id>
        <label>UBXN1</label>
    </interactant>
    <organismsDiffer>false</organismsDiffer>
    <experiments>3</experiments>
</comment>
<comment type="interaction">
    <interactant intactId="EBI-352682">
        <id>P04792</id>
    </interactant>
    <interactant intactId="EBI-10696113">
        <id>O75604-3</id>
        <label>USP2</label>
    </interactant>
    <organismsDiffer>false</organismsDiffer>
    <experiments>3</experiments>
</comment>
<comment type="interaction">
    <interactant intactId="EBI-352682">
        <id>P04792</id>
    </interactant>
    <interactant intactId="EBI-354022">
        <id>P45880</id>
        <label>VDAC2</label>
    </interactant>
    <organismsDiffer>false</organismsDiffer>
    <experiments>3</experiments>
</comment>
<comment type="interaction">
    <interactant intactId="EBI-352682">
        <id>P04792</id>
    </interactant>
    <interactant intactId="EBI-6427899">
        <id>P58304</id>
        <label>VSX2</label>
    </interactant>
    <organismsDiffer>false</organismsDiffer>
    <experiments>3</experiments>
</comment>
<comment type="interaction">
    <interactant intactId="EBI-352682">
        <id>P04792</id>
    </interactant>
    <interactant intactId="EBI-1237307">
        <id>Q9BQA1</id>
        <label>WDR77</label>
    </interactant>
    <organismsDiffer>false</organismsDiffer>
    <experiments>3</experiments>
</comment>
<comment type="interaction">
    <interactant intactId="EBI-352682">
        <id>P04792</id>
    </interactant>
    <interactant intactId="EBI-7705033">
        <id>Q9BRX9</id>
        <label>WDR83</label>
    </interactant>
    <organismsDiffer>false</organismsDiffer>
    <experiments>4</experiments>
</comment>
<comment type="interaction">
    <interactant intactId="EBI-352682">
        <id>P04792</id>
    </interactant>
    <interactant intactId="EBI-12040603">
        <id>Q9NZC7-5</id>
        <label>WWOX</label>
    </interactant>
    <organismsDiffer>false</organismsDiffer>
    <experiments>3</experiments>
</comment>
<comment type="interaction">
    <interactant intactId="EBI-352682">
        <id>P04792</id>
    </interactant>
    <interactant intactId="EBI-357997">
        <id>P13010</id>
        <label>XRCC5</label>
    </interactant>
    <organismsDiffer>false</organismsDiffer>
    <experiments>2</experiments>
</comment>
<comment type="interaction">
    <interactant intactId="EBI-352682">
        <id>P04792</id>
    </interactant>
    <interactant intactId="EBI-347088">
        <id>P63104</id>
        <label>YWHAZ</label>
    </interactant>
    <organismsDiffer>false</organismsDiffer>
    <experiments>4</experiments>
</comment>
<comment type="interaction">
    <interactant intactId="EBI-352682">
        <id>P04792</id>
    </interactant>
    <interactant intactId="EBI-11124401">
        <id>Q8TBF4</id>
        <label>ZCRB1</label>
    </interactant>
    <organismsDiffer>false</organismsDiffer>
    <experiments>3</experiments>
</comment>
<comment type="interaction">
    <interactant intactId="EBI-352682">
        <id>P04792</id>
    </interactant>
    <interactant intactId="EBI-6448240">
        <id>Q96K21</id>
        <label>ZFYVE19</label>
    </interactant>
    <organismsDiffer>false</organismsDiffer>
    <experiments>3</experiments>
</comment>
<comment type="interaction">
    <interactant intactId="EBI-352682">
        <id>P04792</id>
    </interactant>
    <interactant intactId="EBI-25831733">
        <id>Q96MN9-2</id>
        <label>ZNF488</label>
    </interactant>
    <organismsDiffer>false</organismsDiffer>
    <experiments>3</experiments>
</comment>
<comment type="interaction">
    <interactant intactId="EBI-352682">
        <id>P04792</id>
    </interactant>
    <interactant intactId="EBI-12939666">
        <id>Q96N77-2</id>
        <label>ZNF641</label>
    </interactant>
    <organismsDiffer>false</organismsDiffer>
    <experiments>3</experiments>
</comment>
<comment type="interaction">
    <interactant intactId="EBI-352682">
        <id>P04792</id>
    </interactant>
    <interactant intactId="EBI-745276">
        <id>Q9BS34</id>
        <label>ZNF670</label>
    </interactant>
    <organismsDiffer>false</organismsDiffer>
    <experiments>3</experiments>
</comment>
<comment type="interaction">
    <interactant intactId="EBI-352682">
        <id>P04792</id>
    </interactant>
    <interactant intactId="EBI-3920053">
        <id>Q16670</id>
        <label>ZSCAN26</label>
    </interactant>
    <organismsDiffer>false</organismsDiffer>
    <experiments>3</experiments>
</comment>
<comment type="interaction">
    <interactant intactId="EBI-352682">
        <id>P04792</id>
    </interactant>
    <interactant intactId="EBI-1538838">
        <id>Q2QGD7</id>
        <label>ZXDC</label>
    </interactant>
    <organismsDiffer>false</organismsDiffer>
    <experiments>3</experiments>
</comment>
<comment type="interaction">
    <interactant intactId="EBI-352682">
        <id>P04792</id>
    </interactant>
    <interactant intactId="EBI-10211777">
        <id>A0A384ME25</id>
    </interactant>
    <organismsDiffer>false</organismsDiffer>
    <experiments>3</experiments>
</comment>
<comment type="interaction">
    <interactant intactId="EBI-352682">
        <id>P04792</id>
    </interactant>
    <interactant intactId="EBI-25831617">
        <id>B7Z3E8</id>
    </interactant>
    <organismsDiffer>false</organismsDiffer>
    <experiments>3</experiments>
</comment>
<comment type="interaction">
    <interactant intactId="EBI-352682">
        <id>P04792</id>
    </interactant>
    <interactant intactId="EBI-25831943">
        <id>Q7L8T7</id>
    </interactant>
    <organismsDiffer>false</organismsDiffer>
    <experiments>3</experiments>
</comment>
<comment type="interaction">
    <interactant intactId="EBI-352682">
        <id>P04792</id>
    </interactant>
    <interactant intactId="EBI-10259496">
        <id>Q86V28</id>
    </interactant>
    <organismsDiffer>false</organismsDiffer>
    <experiments>3</experiments>
</comment>
<comment type="subcellular location">
    <subcellularLocation>
        <location evidence="6 28">Cytoplasm</location>
    </subcellularLocation>
    <subcellularLocation>
        <location evidence="17">Nucleus</location>
    </subcellularLocation>
    <subcellularLocation>
        <location evidence="6">Cytoplasm</location>
        <location evidence="6">Cytoskeleton</location>
        <location evidence="6">Spindle</location>
    </subcellularLocation>
    <text evidence="17">Cytoplasmic in interphase cells. Colocalizes with mitotic spindles in mitotic cells. Translocates to the nucleus during heat shock and resides in sub-nuclear structures known as SC35 speckles or nuclear splicing speckles.</text>
</comment>
<comment type="tissue specificity">
    <text evidence="10">Detected in all tissues tested: skeletal muscle, heart, aorta, large intestine, small intestine, stomach, esophagus, bladder, adrenal gland, thyroid, pancreas, testis, adipose tissue, kidney, liver, spleen, cerebral cortex, blood serum and cerebrospinal fluid. Highest levels are found in the heart and in tissues composed of striated and smooth muscle.</text>
</comment>
<comment type="induction">
    <text evidence="26 30">Up-regulated in response to environmental stresses such as heat shock (PubMed:8325890). Up-regulated by estrogen stimulation (PubMed:2743305).</text>
</comment>
<comment type="induction">
    <text evidence="12">(Microbial infection) Up-regulated in response to enterovirus 71 (EV71) infection (at protein level).</text>
</comment>
<comment type="PTM">
    <text evidence="8 16 29 30">Phosphorylated upon exposure to protein kinase C activators and heat shock (PubMed:8325890). Phosphorylation by MAPKAPK2 and MAPKAPK3 in response to stress dissociates HSPB1 from large small heat-shock protein (sHsps) oligomers and impairs its chaperone activity and ability to protect against oxidative stress effectively. Phosphorylation by MAPKAPK5 in response to PKA stimulation induces F-actin rearrangement (PubMed:1332886, PubMed:19166925, PubMed:8093612).</text>
</comment>
<comment type="disease" evidence="9 18 20 21 23">
    <disease id="DI-00280">
        <name>Charcot-Marie-Tooth disease, axonal, type 2F</name>
        <acronym>CMT2F</acronym>
        <description>A dominant axonal form of Charcot-Marie-Tooth disease, a disorder of the peripheral nervous system, characterized by progressive weakness and atrophy, initially of the peroneal muscles and later of the distal muscles of the arms. Charcot-Marie-Tooth disease is classified in two main groups on the basis of electrophysiologic properties and histopathology: primary peripheral demyelinating neuropathies (designated CMT1 when they are dominantly inherited) and primary peripheral axonal neuropathies (CMT2). Neuropathies of the CMT2 group are characterized by signs of axonal degeneration in the absence of obvious myelin alterations, normal or slightly reduced nerve conduction velocities, and progressive distal muscle weakness and atrophy. Onset of Charcot-Marie-Tooth disease type 2F is between 15 and 25 years with muscle weakness and atrophy usually beginning in feet and legs (peroneal distribution). Upper limb involvement occurs later.</description>
        <dbReference type="MIM" id="606595"/>
    </disease>
    <text>The disease is caused by variants affecting the gene represented in this entry.</text>
</comment>
<comment type="disease" evidence="9 14 15 18 19 20 22 23 24 25 28">
    <disease id="DI-00401">
        <name>Neuronopathy, distal hereditary motor, autosomal dominant 3</name>
        <acronym>HMND3</acronym>
        <description>A form of distal hereditary motor neuronopathy, a heterogeneous group of neuromuscular disorders caused by selective degeneration of motor neurons in the anterior horn of the spinal cord, without sensory deficit in the posterior horn. The overall clinical picture consists of a classical distal muscular atrophy syndrome in the legs without clinical sensory loss. The disease starts with weakness and wasting of distal muscles of the anterior tibial and peroneal compartments of the legs. Later on, weakness and atrophy may expand to the proximal muscles of the lower limbs and/or to the distal upper limbs.</description>
        <dbReference type="MIM" id="608634"/>
    </disease>
    <text>The disease is caused by variants affecting the gene represented in this entry.</text>
</comment>
<comment type="similarity">
    <text evidence="3">Belongs to the small heat shock protein (HSP20) family.</text>
</comment>
<comment type="sequence caution" evidence="33">
    <conflict type="frameshift">
        <sequence resource="EMBL-CDS" id="AAA62175"/>
    </conflict>
</comment>
<comment type="sequence caution" evidence="33">
    <conflict type="frameshift">
        <sequence resource="EMBL-CDS" id="AAB20722"/>
    </conflict>
</comment>
<comment type="sequence caution" evidence="33">
    <conflict type="frameshift">
        <sequence resource="EMBL-CDS" id="CAA34498"/>
    </conflict>
</comment>
<comment type="online information" name="Inherited peripheral neuropathies mutation db">
    <link uri="https://uantwerpen.vib.be/CMTMutations"/>
</comment>
<comment type="online information" name="Atlas of Genetics and Cytogenetics in Oncology and Haematology">
    <link uri="https://atlasgeneticsoncology.org/gene/40880/HSPB1"/>
</comment>
<evidence type="ECO:0000250" key="1"/>
<evidence type="ECO:0000250" key="2">
    <source>
        <dbReference type="UniProtKB" id="P42930"/>
    </source>
</evidence>
<evidence type="ECO:0000255" key="3">
    <source>
        <dbReference type="PROSITE-ProRule" id="PRU00285"/>
    </source>
</evidence>
<evidence type="ECO:0000269" key="4">
    <source>
    </source>
</evidence>
<evidence type="ECO:0000269" key="5">
    <source>
    </source>
</evidence>
<evidence type="ECO:0000269" key="6">
    <source>
    </source>
</evidence>
<evidence type="ECO:0000269" key="7">
    <source>
    </source>
</evidence>
<evidence type="ECO:0000269" key="8">
    <source>
    </source>
</evidence>
<evidence type="ECO:0000269" key="9">
    <source>
    </source>
</evidence>
<evidence type="ECO:0000269" key="10">
    <source>
    </source>
</evidence>
<evidence type="ECO:0000269" key="11">
    <source>
    </source>
</evidence>
<evidence type="ECO:0000269" key="12">
    <source>
    </source>
</evidence>
<evidence type="ECO:0000269" key="13">
    <source>
    </source>
</evidence>
<evidence type="ECO:0000269" key="14">
    <source>
    </source>
</evidence>
<evidence type="ECO:0000269" key="15">
    <source>
    </source>
</evidence>
<evidence type="ECO:0000269" key="16">
    <source>
    </source>
</evidence>
<evidence type="ECO:0000269" key="17">
    <source>
    </source>
</evidence>
<evidence type="ECO:0000269" key="18">
    <source>
    </source>
</evidence>
<evidence type="ECO:0000269" key="19">
    <source>
    </source>
</evidence>
<evidence type="ECO:0000269" key="20">
    <source>
    </source>
</evidence>
<evidence type="ECO:0000269" key="21">
    <source>
    </source>
</evidence>
<evidence type="ECO:0000269" key="22">
    <source>
    </source>
</evidence>
<evidence type="ECO:0000269" key="23">
    <source>
    </source>
</evidence>
<evidence type="ECO:0000269" key="24">
    <source>
    </source>
</evidence>
<evidence type="ECO:0000269" key="25">
    <source>
    </source>
</evidence>
<evidence type="ECO:0000269" key="26">
    <source>
    </source>
</evidence>
<evidence type="ECO:0000269" key="27">
    <source>
    </source>
</evidence>
<evidence type="ECO:0000269" key="28">
    <source>
    </source>
</evidence>
<evidence type="ECO:0000269" key="29">
    <source>
    </source>
</evidence>
<evidence type="ECO:0000269" key="30">
    <source>
    </source>
</evidence>
<evidence type="ECO:0000269" key="31">
    <source>
    </source>
</evidence>
<evidence type="ECO:0000269" key="32">
    <source ref="14"/>
</evidence>
<evidence type="ECO:0000305" key="33"/>
<evidence type="ECO:0007744" key="34">
    <source>
    </source>
</evidence>
<evidence type="ECO:0007744" key="35">
    <source>
    </source>
</evidence>
<evidence type="ECO:0007744" key="36">
    <source>
    </source>
</evidence>
<evidence type="ECO:0007744" key="37">
    <source>
    </source>
</evidence>
<evidence type="ECO:0007744" key="38">
    <source>
    </source>
</evidence>
<evidence type="ECO:0007744" key="39">
    <source>
    </source>
</evidence>
<evidence type="ECO:0007744" key="40">
    <source>
    </source>
</evidence>
<evidence type="ECO:0007744" key="41">
    <source>
    </source>
</evidence>
<evidence type="ECO:0007744" key="42">
    <source>
    </source>
</evidence>
<evidence type="ECO:0007744" key="43">
    <source>
    </source>
</evidence>
<evidence type="ECO:0007829" key="44">
    <source>
        <dbReference type="PDB" id="2N3J"/>
    </source>
</evidence>
<evidence type="ECO:0007829" key="45">
    <source>
        <dbReference type="PDB" id="3Q9P"/>
    </source>
</evidence>
<evidence type="ECO:0007829" key="46">
    <source>
        <dbReference type="PDB" id="4MJH"/>
    </source>
</evidence>
<proteinExistence type="evidence at protein level"/>
<name>HSPB1_HUMAN</name>
<gene>
    <name type="primary">HSPB1</name>
    <name type="synonym">HSP27</name>
    <name type="synonym">HSP28</name>
</gene>
<sequence>MTERRVPFSLLRGPSWDPFRDWYPHSRLFDQAFGLPRLPEEWSQWLGGSSWPGYVRPLPPAAIESPAVAAPAYSRALSRQLSSGVSEIRHTADRWRVSLDVNHFAPDELTVKTKDGVVEITGKHEERQDEHGYISRCFTRKYTLPPGVDPTQVSSSLSPEGTLTVEAPMPKLATQSNEITIPVTFESRAQLGGPEAAKSDETAAK</sequence>
<dbReference type="EMBL" id="L39370">
    <property type="protein sequence ID" value="AAA62175.1"/>
    <property type="status" value="ALT_FRAME"/>
    <property type="molecule type" value="Genomic_DNA"/>
</dbReference>
<dbReference type="EMBL" id="X54079">
    <property type="protein sequence ID" value="CAA38016.1"/>
    <property type="molecule type" value="mRNA"/>
</dbReference>
<dbReference type="EMBL" id="Z23090">
    <property type="protein sequence ID" value="CAA80636.1"/>
    <property type="molecule type" value="mRNA"/>
</dbReference>
<dbReference type="EMBL" id="AB020027">
    <property type="protein sequence ID" value="BAB17232.1"/>
    <property type="molecule type" value="mRNA"/>
</dbReference>
<dbReference type="EMBL" id="U90906">
    <property type="protein sequence ID" value="AAB51056.1"/>
    <property type="molecule type" value="mRNA"/>
</dbReference>
<dbReference type="EMBL" id="CR407614">
    <property type="protein sequence ID" value="CAG28542.1"/>
    <property type="molecule type" value="mRNA"/>
</dbReference>
<dbReference type="EMBL" id="CR536489">
    <property type="protein sequence ID" value="CAG38728.1"/>
    <property type="molecule type" value="mRNA"/>
</dbReference>
<dbReference type="EMBL" id="BT019888">
    <property type="protein sequence ID" value="AAV38691.1"/>
    <property type="molecule type" value="mRNA"/>
</dbReference>
<dbReference type="EMBL" id="AK311894">
    <property type="protein sequence ID" value="BAG34835.1"/>
    <property type="molecule type" value="mRNA"/>
</dbReference>
<dbReference type="EMBL" id="DQ379985">
    <property type="protein sequence ID" value="ABC88475.1"/>
    <property type="molecule type" value="Genomic_DNA"/>
</dbReference>
<dbReference type="EMBL" id="AC006388">
    <property type="status" value="NOT_ANNOTATED_CDS"/>
    <property type="molecule type" value="Genomic_DNA"/>
</dbReference>
<dbReference type="EMBL" id="CH471220">
    <property type="protein sequence ID" value="EAW71803.1"/>
    <property type="molecule type" value="Genomic_DNA"/>
</dbReference>
<dbReference type="EMBL" id="BC000510">
    <property type="protein sequence ID" value="AAH00510.1"/>
    <property type="molecule type" value="mRNA"/>
</dbReference>
<dbReference type="EMBL" id="BC012292">
    <property type="protein sequence ID" value="AAH12292.1"/>
    <property type="molecule type" value="mRNA"/>
</dbReference>
<dbReference type="EMBL" id="BC012768">
    <property type="protein sequence ID" value="AAH12768.1"/>
    <property type="molecule type" value="mRNA"/>
</dbReference>
<dbReference type="EMBL" id="BC014920">
    <property type="protein sequence ID" value="AAH14920.1"/>
    <property type="molecule type" value="mRNA"/>
</dbReference>
<dbReference type="EMBL" id="BC073768">
    <property type="protein sequence ID" value="AAH73768.1"/>
    <property type="molecule type" value="mRNA"/>
</dbReference>
<dbReference type="EMBL" id="X16477">
    <property type="protein sequence ID" value="CAA34498.1"/>
    <property type="status" value="ALT_FRAME"/>
    <property type="molecule type" value="mRNA"/>
</dbReference>
<dbReference type="EMBL" id="S74571">
    <property type="protein sequence ID" value="AAB20722.1"/>
    <property type="status" value="ALT_FRAME"/>
    <property type="molecule type" value="mRNA"/>
</dbReference>
<dbReference type="CCDS" id="CCDS5583.1"/>
<dbReference type="PIR" id="S12102">
    <property type="entry name" value="HHHU27"/>
</dbReference>
<dbReference type="RefSeq" id="NP_001531.1">
    <property type="nucleotide sequence ID" value="NM_001540.5"/>
</dbReference>
<dbReference type="PDB" id="2N3J">
    <property type="method" value="NMR"/>
    <property type="chains" value="A/B=80-176"/>
</dbReference>
<dbReference type="PDB" id="3Q9P">
    <property type="method" value="X-ray"/>
    <property type="resolution" value="2.00 A"/>
    <property type="chains" value="A=90-171"/>
</dbReference>
<dbReference type="PDB" id="3Q9Q">
    <property type="method" value="X-ray"/>
    <property type="resolution" value="2.20 A"/>
    <property type="chains" value="A/B=90-171"/>
</dbReference>
<dbReference type="PDB" id="4MJH">
    <property type="method" value="X-ray"/>
    <property type="resolution" value="2.60 A"/>
    <property type="chains" value="A/C=84-176, B/D=179-186"/>
</dbReference>
<dbReference type="PDB" id="6DV5">
    <property type="method" value="X-ray"/>
    <property type="resolution" value="3.58 A"/>
    <property type="chains" value="A/B/C/D/E/F/G/H/I/J/K/L/M/N/O/P/Q/R/S/T/U/V/W/X=1-205"/>
</dbReference>
<dbReference type="PDB" id="6GJH">
    <property type="method" value="X-ray"/>
    <property type="resolution" value="2.10 A"/>
    <property type="chains" value="A/B/C/D/E/F/G/H=84-170"/>
</dbReference>
<dbReference type="PDBsum" id="2N3J"/>
<dbReference type="PDBsum" id="3Q9P"/>
<dbReference type="PDBsum" id="3Q9Q"/>
<dbReference type="PDBsum" id="4MJH"/>
<dbReference type="PDBsum" id="6DV5"/>
<dbReference type="PDBsum" id="6GJH"/>
<dbReference type="SMR" id="P04792"/>
<dbReference type="BioGRID" id="109547">
    <property type="interactions" value="722"/>
</dbReference>
<dbReference type="CORUM" id="P04792"/>
<dbReference type="DIP" id="DIP-412N"/>
<dbReference type="FunCoup" id="P04792">
    <property type="interactions" value="1899"/>
</dbReference>
<dbReference type="IntAct" id="P04792">
    <property type="interactions" value="605"/>
</dbReference>
<dbReference type="MINT" id="P04792"/>
<dbReference type="STRING" id="9606.ENSP00000248553"/>
<dbReference type="BindingDB" id="P04792"/>
<dbReference type="ChEMBL" id="CHEMBL5976"/>
<dbReference type="DrugBank" id="DB06094">
    <property type="generic name" value="Apatorsen"/>
</dbReference>
<dbReference type="DrugBank" id="DB11638">
    <property type="generic name" value="Artenimol"/>
</dbReference>
<dbReference type="DrugBank" id="DB12695">
    <property type="generic name" value="Phenethyl Isothiocyanate"/>
</dbReference>
<dbReference type="MoonDB" id="P04792">
    <property type="type" value="Predicted"/>
</dbReference>
<dbReference type="GlyCosmos" id="P04792">
    <property type="glycosylation" value="5 sites, 1 glycan"/>
</dbReference>
<dbReference type="GlyGen" id="P04792">
    <property type="glycosylation" value="8 sites, 1 O-linked glycan (7 sites)"/>
</dbReference>
<dbReference type="iPTMnet" id="P04792"/>
<dbReference type="PhosphoSitePlus" id="P04792"/>
<dbReference type="SwissPalm" id="P04792"/>
<dbReference type="BioMuta" id="HSPB1"/>
<dbReference type="DMDM" id="19855073"/>
<dbReference type="OGP" id="P04792"/>
<dbReference type="REPRODUCTION-2DPAGE" id="IPI00025512"/>
<dbReference type="REPRODUCTION-2DPAGE" id="P04792"/>
<dbReference type="CPTAC" id="CPTAC-1351"/>
<dbReference type="CPTAC" id="CPTAC-1426"/>
<dbReference type="CPTAC" id="CPTAC-1427"/>
<dbReference type="CPTAC" id="CPTAC-1428"/>
<dbReference type="CPTAC" id="CPTAC-1429"/>
<dbReference type="CPTAC" id="CPTAC-1430"/>
<dbReference type="CPTAC" id="CPTAC-702"/>
<dbReference type="CPTAC" id="CPTAC-703"/>
<dbReference type="CPTAC" id="CPTAC-704"/>
<dbReference type="CPTAC" id="CPTAC-970"/>
<dbReference type="jPOST" id="P04792"/>
<dbReference type="MassIVE" id="P04792"/>
<dbReference type="PaxDb" id="9606-ENSP00000248553"/>
<dbReference type="PeptideAtlas" id="P04792"/>
<dbReference type="PRIDE" id="P04792"/>
<dbReference type="ProteomicsDB" id="51743"/>
<dbReference type="Pumba" id="P04792"/>
<dbReference type="TopDownProteomics" id="P04792"/>
<dbReference type="ABCD" id="P04792">
    <property type="antibodies" value="3 sequenced antibodies"/>
</dbReference>
<dbReference type="Antibodypedia" id="603">
    <property type="antibodies" value="3202 antibodies from 54 providers"/>
</dbReference>
<dbReference type="CPTC" id="P04792">
    <property type="antibodies" value="6 antibodies"/>
</dbReference>
<dbReference type="DNASU" id="3315"/>
<dbReference type="Ensembl" id="ENST00000248553.7">
    <property type="protein sequence ID" value="ENSP00000248553.6"/>
    <property type="gene ID" value="ENSG00000106211.11"/>
</dbReference>
<dbReference type="GeneID" id="3315"/>
<dbReference type="KEGG" id="hsa:3315"/>
<dbReference type="MANE-Select" id="ENST00000248553.7">
    <property type="protein sequence ID" value="ENSP00000248553.6"/>
    <property type="RefSeq nucleotide sequence ID" value="NM_001540.5"/>
    <property type="RefSeq protein sequence ID" value="NP_001531.1"/>
</dbReference>
<dbReference type="AGR" id="HGNC:5246"/>
<dbReference type="CTD" id="3315"/>
<dbReference type="DisGeNET" id="3315"/>
<dbReference type="GeneCards" id="HSPB1"/>
<dbReference type="GeneReviews" id="HSPB1"/>
<dbReference type="HGNC" id="HGNC:5246">
    <property type="gene designation" value="HSPB1"/>
</dbReference>
<dbReference type="HPA" id="ENSG00000106211">
    <property type="expression patterns" value="Tissue enhanced (esophagus)"/>
</dbReference>
<dbReference type="MalaCards" id="HSPB1"/>
<dbReference type="MIM" id="602195">
    <property type="type" value="gene"/>
</dbReference>
<dbReference type="MIM" id="606595">
    <property type="type" value="phenotype"/>
</dbReference>
<dbReference type="MIM" id="608634">
    <property type="type" value="phenotype"/>
</dbReference>
<dbReference type="neXtProt" id="NX_P04792"/>
<dbReference type="OpenTargets" id="ENSG00000106211"/>
<dbReference type="Orphanet" id="99940">
    <property type="disease" value="Autosomal dominant Charcot-Marie-Tooth disease type 2F"/>
</dbReference>
<dbReference type="Orphanet" id="139525">
    <property type="disease" value="Distal hereditary motor neuropathy type 2"/>
</dbReference>
<dbReference type="PharmGKB" id="PA29511"/>
<dbReference type="VEuPathDB" id="HostDB:ENSG00000106211"/>
<dbReference type="eggNOG" id="KOG3591">
    <property type="taxonomic scope" value="Eukaryota"/>
</dbReference>
<dbReference type="GeneTree" id="ENSGT00940000155882"/>
<dbReference type="HOGENOM" id="CLU_095001_0_0_1"/>
<dbReference type="InParanoid" id="P04792"/>
<dbReference type="OrthoDB" id="10060792at2759"/>
<dbReference type="PAN-GO" id="P04792">
    <property type="GO annotations" value="5 GO annotations based on evolutionary models"/>
</dbReference>
<dbReference type="PhylomeDB" id="P04792"/>
<dbReference type="TreeFam" id="TF105049"/>
<dbReference type="PathwayCommons" id="P04792"/>
<dbReference type="Reactome" id="R-HSA-4420097">
    <property type="pathway name" value="VEGFA-VEGFR2 Pathway"/>
</dbReference>
<dbReference type="Reactome" id="R-HSA-450408">
    <property type="pathway name" value="AUF1 (hnRNP D0) binds and destabilizes mRNA"/>
</dbReference>
<dbReference type="Reactome" id="R-HSA-5687128">
    <property type="pathway name" value="MAPK6/MAPK4 signaling"/>
</dbReference>
<dbReference type="Reactome" id="R-HSA-9009391">
    <property type="pathway name" value="Extra-nuclear estrogen signaling"/>
</dbReference>
<dbReference type="SignaLink" id="P04792"/>
<dbReference type="SIGNOR" id="P04792"/>
<dbReference type="BioGRID-ORCS" id="3315">
    <property type="hits" value="13 hits in 1158 CRISPR screens"/>
</dbReference>
<dbReference type="CD-CODE" id="232F8A39">
    <property type="entry name" value="P-body"/>
</dbReference>
<dbReference type="CD-CODE" id="91857CE7">
    <property type="entry name" value="Nucleolus"/>
</dbReference>
<dbReference type="CD-CODE" id="DEE660B4">
    <property type="entry name" value="Stress granule"/>
</dbReference>
<dbReference type="CD-CODE" id="FB4E32DD">
    <property type="entry name" value="Presynaptic clusters and postsynaptic densities"/>
</dbReference>
<dbReference type="ChiTaRS" id="HSPB1">
    <property type="organism name" value="human"/>
</dbReference>
<dbReference type="EvolutionaryTrace" id="P04792"/>
<dbReference type="GeneWiki" id="Hsp27"/>
<dbReference type="GenomeRNAi" id="3315"/>
<dbReference type="Pharos" id="P04792">
    <property type="development level" value="Tchem"/>
</dbReference>
<dbReference type="PRO" id="PR:P04792"/>
<dbReference type="Proteomes" id="UP000005640">
    <property type="component" value="Chromosome 7"/>
</dbReference>
<dbReference type="RNAct" id="P04792">
    <property type="molecule type" value="protein"/>
</dbReference>
<dbReference type="Bgee" id="ENSG00000106211">
    <property type="expression patterns" value="Expressed in lower esophagus mucosa and 207 other cell types or tissues"/>
</dbReference>
<dbReference type="ExpressionAtlas" id="P04792">
    <property type="expression patterns" value="baseline and differential"/>
</dbReference>
<dbReference type="GO" id="GO:1904115">
    <property type="term" value="C:axon cytoplasm"/>
    <property type="evidence" value="ECO:0007669"/>
    <property type="project" value="GOC"/>
</dbReference>
<dbReference type="GO" id="GO:0001533">
    <property type="term" value="C:cornified envelope"/>
    <property type="evidence" value="ECO:0007669"/>
    <property type="project" value="Ensembl"/>
</dbReference>
<dbReference type="GO" id="GO:0005737">
    <property type="term" value="C:cytoplasm"/>
    <property type="evidence" value="ECO:0000314"/>
    <property type="project" value="UniProtKB"/>
</dbReference>
<dbReference type="GO" id="GO:0005856">
    <property type="term" value="C:cytoskeleton"/>
    <property type="evidence" value="ECO:0000304"/>
    <property type="project" value="UniProtKB"/>
</dbReference>
<dbReference type="GO" id="GO:0005829">
    <property type="term" value="C:cytosol"/>
    <property type="evidence" value="ECO:0000304"/>
    <property type="project" value="Reactome"/>
</dbReference>
<dbReference type="GO" id="GO:0070062">
    <property type="term" value="C:extracellular exosome"/>
    <property type="evidence" value="ECO:0007005"/>
    <property type="project" value="UniProtKB"/>
</dbReference>
<dbReference type="GO" id="GO:0005615">
    <property type="term" value="C:extracellular space"/>
    <property type="evidence" value="ECO:0007005"/>
    <property type="project" value="UniProtKB"/>
</dbReference>
<dbReference type="GO" id="GO:0005925">
    <property type="term" value="C:focal adhesion"/>
    <property type="evidence" value="ECO:0007005"/>
    <property type="project" value="UniProtKB"/>
</dbReference>
<dbReference type="GO" id="GO:0005634">
    <property type="term" value="C:nucleus"/>
    <property type="evidence" value="ECO:0000314"/>
    <property type="project" value="UniProtKB"/>
</dbReference>
<dbReference type="GO" id="GO:0000502">
    <property type="term" value="C:proteasome complex"/>
    <property type="evidence" value="ECO:0000250"/>
    <property type="project" value="BHF-UCL"/>
</dbReference>
<dbReference type="GO" id="GO:0005819">
    <property type="term" value="C:spindle"/>
    <property type="evidence" value="ECO:0007669"/>
    <property type="project" value="UniProtKB-SubCell"/>
</dbReference>
<dbReference type="GO" id="GO:0030018">
    <property type="term" value="C:Z disc"/>
    <property type="evidence" value="ECO:0007669"/>
    <property type="project" value="Ensembl"/>
</dbReference>
<dbReference type="GO" id="GO:0042802">
    <property type="term" value="F:identical protein binding"/>
    <property type="evidence" value="ECO:0000315"/>
    <property type="project" value="UniProtKB"/>
</dbReference>
<dbReference type="GO" id="GO:0044183">
    <property type="term" value="F:protein folding chaperone"/>
    <property type="evidence" value="ECO:0000315"/>
    <property type="project" value="UniProtKB"/>
</dbReference>
<dbReference type="GO" id="GO:0042803">
    <property type="term" value="F:protein homodimerization activity"/>
    <property type="evidence" value="ECO:0000314"/>
    <property type="project" value="UniProtKB"/>
</dbReference>
<dbReference type="GO" id="GO:0019901">
    <property type="term" value="F:protein kinase binding"/>
    <property type="evidence" value="ECO:0000353"/>
    <property type="project" value="UniProtKB"/>
</dbReference>
<dbReference type="GO" id="GO:0005080">
    <property type="term" value="F:protein kinase C binding"/>
    <property type="evidence" value="ECO:0000250"/>
    <property type="project" value="BHF-UCL"/>
</dbReference>
<dbReference type="GO" id="GO:0008426">
    <property type="term" value="F:protein kinase C inhibitor activity"/>
    <property type="evidence" value="ECO:0000250"/>
    <property type="project" value="BHF-UCL"/>
</dbReference>
<dbReference type="GO" id="GO:0003723">
    <property type="term" value="F:RNA binding"/>
    <property type="evidence" value="ECO:0007005"/>
    <property type="project" value="UniProtKB"/>
</dbReference>
<dbReference type="GO" id="GO:0061629">
    <property type="term" value="F:RNA polymerase II-specific DNA-binding transcription factor binding"/>
    <property type="evidence" value="ECO:0000353"/>
    <property type="project" value="ARUK-UCL"/>
</dbReference>
<dbReference type="GO" id="GO:0043130">
    <property type="term" value="F:ubiquitin binding"/>
    <property type="evidence" value="ECO:0000250"/>
    <property type="project" value="BHF-UCL"/>
</dbReference>
<dbReference type="GO" id="GO:0051082">
    <property type="term" value="F:unfolded protein binding"/>
    <property type="evidence" value="ECO:0000318"/>
    <property type="project" value="GO_Central"/>
</dbReference>
<dbReference type="GO" id="GO:0099641">
    <property type="term" value="P:anterograde axonal protein transport"/>
    <property type="evidence" value="ECO:0000315"/>
    <property type="project" value="UniProtKB"/>
</dbReference>
<dbReference type="GO" id="GO:0035924">
    <property type="term" value="P:cellular response to vascular endothelial growth factor stimulus"/>
    <property type="evidence" value="ECO:0000315"/>
    <property type="project" value="BHF-UCL"/>
</dbReference>
<dbReference type="GO" id="GO:0061077">
    <property type="term" value="P:chaperone-mediated protein folding"/>
    <property type="evidence" value="ECO:0000315"/>
    <property type="project" value="UniProtKB"/>
</dbReference>
<dbReference type="GO" id="GO:0035556">
    <property type="term" value="P:intracellular signal transduction"/>
    <property type="evidence" value="ECO:0000315"/>
    <property type="project" value="BHF-UCL"/>
</dbReference>
<dbReference type="GO" id="GO:0043066">
    <property type="term" value="P:negative regulation of apoptotic process"/>
    <property type="evidence" value="ECO:0000318"/>
    <property type="project" value="GO_Central"/>
</dbReference>
<dbReference type="GO" id="GO:1902176">
    <property type="term" value="P:negative regulation of oxidative stress-induced intrinsic apoptotic signaling pathway"/>
    <property type="evidence" value="ECO:0000250"/>
    <property type="project" value="BHF-UCL"/>
</dbReference>
<dbReference type="GO" id="GO:0090038">
    <property type="term" value="P:negative regulation of protein kinase C signaling"/>
    <property type="evidence" value="ECO:0000250"/>
    <property type="project" value="BHF-UCL"/>
</dbReference>
<dbReference type="GO" id="GO:0070527">
    <property type="term" value="P:platelet aggregation"/>
    <property type="evidence" value="ECO:0007001"/>
    <property type="project" value="UniProtKB"/>
</dbReference>
<dbReference type="GO" id="GO:0045766">
    <property type="term" value="P:positive regulation of angiogenesis"/>
    <property type="evidence" value="ECO:0000315"/>
    <property type="project" value="BHF-UCL"/>
</dbReference>
<dbReference type="GO" id="GO:0043536">
    <property type="term" value="P:positive regulation of blood vessel endothelial cell migration"/>
    <property type="evidence" value="ECO:0000315"/>
    <property type="project" value="BHF-UCL"/>
</dbReference>
<dbReference type="GO" id="GO:2001028">
    <property type="term" value="P:positive regulation of endothelial cell chemotaxis"/>
    <property type="evidence" value="ECO:0000315"/>
    <property type="project" value="BHF-UCL"/>
</dbReference>
<dbReference type="GO" id="GO:0032731">
    <property type="term" value="P:positive regulation of interleukin-1 beta production"/>
    <property type="evidence" value="ECO:0000250"/>
    <property type="project" value="BHF-UCL"/>
</dbReference>
<dbReference type="GO" id="GO:0032760">
    <property type="term" value="P:positive regulation of tumor necrosis factor production"/>
    <property type="evidence" value="ECO:0000250"/>
    <property type="project" value="BHF-UCL"/>
</dbReference>
<dbReference type="GO" id="GO:0042026">
    <property type="term" value="P:protein refolding"/>
    <property type="evidence" value="ECO:0000318"/>
    <property type="project" value="GO_Central"/>
</dbReference>
<dbReference type="GO" id="GO:0010506">
    <property type="term" value="P:regulation of autophagy"/>
    <property type="evidence" value="ECO:0000303"/>
    <property type="project" value="ParkinsonsUK-UCL"/>
</dbReference>
<dbReference type="GO" id="GO:0043122">
    <property type="term" value="P:regulation of canonical NF-kappaB signal transduction"/>
    <property type="evidence" value="ECO:0000250"/>
    <property type="project" value="BHF-UCL"/>
</dbReference>
<dbReference type="GO" id="GO:0001932">
    <property type="term" value="P:regulation of protein phosphorylation"/>
    <property type="evidence" value="ECO:0000315"/>
    <property type="project" value="UniProtKB"/>
</dbReference>
<dbReference type="GO" id="GO:0006446">
    <property type="term" value="P:regulation of translational initiation"/>
    <property type="evidence" value="ECO:0000304"/>
    <property type="project" value="ProtInc"/>
</dbReference>
<dbReference type="GO" id="GO:0009408">
    <property type="term" value="P:response to heat"/>
    <property type="evidence" value="ECO:0000318"/>
    <property type="project" value="GO_Central"/>
</dbReference>
<dbReference type="GO" id="GO:0006986">
    <property type="term" value="P:response to unfolded protein"/>
    <property type="evidence" value="ECO:0000304"/>
    <property type="project" value="ProtInc"/>
</dbReference>
<dbReference type="GO" id="GO:0009615">
    <property type="term" value="P:response to virus"/>
    <property type="evidence" value="ECO:0000270"/>
    <property type="project" value="UniProtKB"/>
</dbReference>
<dbReference type="GO" id="GO:0048010">
    <property type="term" value="P:vascular endothelial growth factor receptor signaling pathway"/>
    <property type="evidence" value="ECO:0000315"/>
    <property type="project" value="BHF-UCL"/>
</dbReference>
<dbReference type="CDD" id="cd06475">
    <property type="entry name" value="ACD_HspB1_like"/>
    <property type="match status" value="1"/>
</dbReference>
<dbReference type="FunFam" id="2.60.40.790:FF:000024">
    <property type="entry name" value="heat shock protein beta-1"/>
    <property type="match status" value="1"/>
</dbReference>
<dbReference type="Gene3D" id="2.60.40.790">
    <property type="match status" value="1"/>
</dbReference>
<dbReference type="InterPro" id="IPR002068">
    <property type="entry name" value="A-crystallin/Hsp20_dom"/>
</dbReference>
<dbReference type="InterPro" id="IPR037876">
    <property type="entry name" value="ACD_HspB1"/>
</dbReference>
<dbReference type="InterPro" id="IPR001436">
    <property type="entry name" value="Alpha-crystallin/sHSP_animal"/>
</dbReference>
<dbReference type="InterPro" id="IPR008978">
    <property type="entry name" value="HSP20-like_chaperone"/>
</dbReference>
<dbReference type="PANTHER" id="PTHR45640:SF7">
    <property type="entry name" value="HEAT SHOCK PROTEIN BETA-1"/>
    <property type="match status" value="1"/>
</dbReference>
<dbReference type="PANTHER" id="PTHR45640">
    <property type="entry name" value="HEAT SHOCK PROTEIN HSP-12.2-RELATED"/>
    <property type="match status" value="1"/>
</dbReference>
<dbReference type="Pfam" id="PF00011">
    <property type="entry name" value="HSP20"/>
    <property type="match status" value="1"/>
</dbReference>
<dbReference type="PRINTS" id="PR00299">
    <property type="entry name" value="ACRYSTALLIN"/>
</dbReference>
<dbReference type="SUPFAM" id="SSF49764">
    <property type="entry name" value="HSP20-like chaperones"/>
    <property type="match status" value="1"/>
</dbReference>
<dbReference type="PROSITE" id="PS01031">
    <property type="entry name" value="SHSP"/>
    <property type="match status" value="1"/>
</dbReference>
<reference key="1">
    <citation type="journal article" date="1986" name="Nucleic Acids Res.">
        <title>Sequence and organization of genes encoding the human 27 kDa heat shock protein.</title>
        <authorList>
            <person name="Hickey E."/>
            <person name="Brandon S.E."/>
            <person name="Potter R."/>
            <person name="Stein G."/>
            <person name="Stein J."/>
            <person name="Weber L.A."/>
        </authorList>
    </citation>
    <scope>NUCLEOTIDE SEQUENCE [GENOMIC DNA]</scope>
</reference>
<reference key="2">
    <citation type="journal article" date="1990" name="Nucleic Acids Res.">
        <title>cDNA sequence of a human heat shock protein HSP27.</title>
        <authorList>
            <person name="Carper S.W."/>
            <person name="Rocheleau T.A."/>
            <person name="Storm F.K."/>
        </authorList>
    </citation>
    <scope>NUCLEOTIDE SEQUENCE [MRNA]</scope>
    <source>
        <tissue>Lung</tissue>
    </source>
</reference>
<reference key="3">
    <citation type="journal article" date="2000" name="Biochem. Biophys. Res. Commun.">
        <title>Small heat shock protein 27 (HSP27) associates with tubulin/microtubules in HeLa cells.</title>
        <authorList>
            <person name="Hino M."/>
            <person name="Kurogi K."/>
            <person name="Okubo M.-A."/>
            <person name="Murata-Hori M."/>
            <person name="Hosoya H."/>
        </authorList>
    </citation>
    <scope>NUCLEOTIDE SEQUENCE [MRNA]</scope>
    <scope>SUBCELLULAR LOCATION</scope>
    <scope>SUBUNIT</scope>
    <source>
        <tissue>Cervix carcinoma</tissue>
    </source>
</reference>
<reference key="4">
    <citation type="submission" date="1993-06" db="EMBL/GenBank/DDBJ databases">
        <title>Identification of a new cDNA sequence from human breast carcinoma cells encoding the 28kDa heat shock protein.</title>
        <authorList>
            <person name="Briolay J."/>
            <person name="Chareyron P."/>
            <person name="Mehlen P."/>
            <person name="Arrigo A."/>
        </authorList>
    </citation>
    <scope>NUCLEOTIDE SEQUENCE [MRNA]</scope>
    <source>
        <tissue>Mammary carcinoma</tissue>
    </source>
</reference>
<reference key="5">
    <citation type="journal article" date="1997" name="Genome Res.">
        <title>Large-scale concatenation cDNA sequencing.</title>
        <authorList>
            <person name="Yu W."/>
            <person name="Andersson B."/>
            <person name="Worley K.C."/>
            <person name="Muzny D.M."/>
            <person name="Ding Y."/>
            <person name="Liu W."/>
            <person name="Ricafrente J.Y."/>
            <person name="Wentland M.A."/>
            <person name="Lennon G."/>
            <person name="Gibbs R.A."/>
        </authorList>
    </citation>
    <scope>NUCLEOTIDE SEQUENCE [LARGE SCALE MRNA]</scope>
    <source>
        <tissue>Brain</tissue>
    </source>
</reference>
<reference key="6">
    <citation type="submission" date="2004-06" db="EMBL/GenBank/DDBJ databases">
        <title>Cloning of human full open reading frames in Gateway(TM) system entry vector (pDONR201).</title>
        <authorList>
            <person name="Halleck A."/>
            <person name="Ebert L."/>
            <person name="Mkoundinya M."/>
            <person name="Schick M."/>
            <person name="Eisenstein S."/>
            <person name="Neubert P."/>
            <person name="Kstrang K."/>
            <person name="Schatten R."/>
            <person name="Shen B."/>
            <person name="Henze S."/>
            <person name="Mar W."/>
            <person name="Korn B."/>
            <person name="Zuo D."/>
            <person name="Hu Y."/>
            <person name="LaBaer J."/>
        </authorList>
    </citation>
    <scope>NUCLEOTIDE SEQUENCE [LARGE SCALE MRNA]</scope>
</reference>
<reference key="7">
    <citation type="submission" date="2004-10" db="EMBL/GenBank/DDBJ databases">
        <title>Cloning of human full-length CDSs in BD Creator(TM) system donor vector.</title>
        <authorList>
            <person name="Kalnine N."/>
            <person name="Chen X."/>
            <person name="Rolfs A."/>
            <person name="Halleck A."/>
            <person name="Hines L."/>
            <person name="Eisenstein S."/>
            <person name="Koundinya M."/>
            <person name="Raphael J."/>
            <person name="Moreira D."/>
            <person name="Kelley T."/>
            <person name="LaBaer J."/>
            <person name="Lin Y."/>
            <person name="Phelan M."/>
            <person name="Farmer A."/>
        </authorList>
    </citation>
    <scope>NUCLEOTIDE SEQUENCE [LARGE SCALE MRNA]</scope>
</reference>
<reference key="8">
    <citation type="journal article" date="2004" name="Nat. Genet.">
        <title>Complete sequencing and characterization of 21,243 full-length human cDNAs.</title>
        <authorList>
            <person name="Ota T."/>
            <person name="Suzuki Y."/>
            <person name="Nishikawa T."/>
            <person name="Otsuki T."/>
            <person name="Sugiyama T."/>
            <person name="Irie R."/>
            <person name="Wakamatsu A."/>
            <person name="Hayashi K."/>
            <person name="Sato H."/>
            <person name="Nagai K."/>
            <person name="Kimura K."/>
            <person name="Makita H."/>
            <person name="Sekine M."/>
            <person name="Obayashi M."/>
            <person name="Nishi T."/>
            <person name="Shibahara T."/>
            <person name="Tanaka T."/>
            <person name="Ishii S."/>
            <person name="Yamamoto J."/>
            <person name="Saito K."/>
            <person name="Kawai Y."/>
            <person name="Isono Y."/>
            <person name="Nakamura Y."/>
            <person name="Nagahari K."/>
            <person name="Murakami K."/>
            <person name="Yasuda T."/>
            <person name="Iwayanagi T."/>
            <person name="Wagatsuma M."/>
            <person name="Shiratori A."/>
            <person name="Sudo H."/>
            <person name="Hosoiri T."/>
            <person name="Kaku Y."/>
            <person name="Kodaira H."/>
            <person name="Kondo H."/>
            <person name="Sugawara M."/>
            <person name="Takahashi M."/>
            <person name="Kanda K."/>
            <person name="Yokoi T."/>
            <person name="Furuya T."/>
            <person name="Kikkawa E."/>
            <person name="Omura Y."/>
            <person name="Abe K."/>
            <person name="Kamihara K."/>
            <person name="Katsuta N."/>
            <person name="Sato K."/>
            <person name="Tanikawa M."/>
            <person name="Yamazaki M."/>
            <person name="Ninomiya K."/>
            <person name="Ishibashi T."/>
            <person name="Yamashita H."/>
            <person name="Murakawa K."/>
            <person name="Fujimori K."/>
            <person name="Tanai H."/>
            <person name="Kimata M."/>
            <person name="Watanabe M."/>
            <person name="Hiraoka S."/>
            <person name="Chiba Y."/>
            <person name="Ishida S."/>
            <person name="Ono Y."/>
            <person name="Takiguchi S."/>
            <person name="Watanabe S."/>
            <person name="Yosida M."/>
            <person name="Hotuta T."/>
            <person name="Kusano J."/>
            <person name="Kanehori K."/>
            <person name="Takahashi-Fujii A."/>
            <person name="Hara H."/>
            <person name="Tanase T.-O."/>
            <person name="Nomura Y."/>
            <person name="Togiya S."/>
            <person name="Komai F."/>
            <person name="Hara R."/>
            <person name="Takeuchi K."/>
            <person name="Arita M."/>
            <person name="Imose N."/>
            <person name="Musashino K."/>
            <person name="Yuuki H."/>
            <person name="Oshima A."/>
            <person name="Sasaki N."/>
            <person name="Aotsuka S."/>
            <person name="Yoshikawa Y."/>
            <person name="Matsunawa H."/>
            <person name="Ichihara T."/>
            <person name="Shiohata N."/>
            <person name="Sano S."/>
            <person name="Moriya S."/>
            <person name="Momiyama H."/>
            <person name="Satoh N."/>
            <person name="Takami S."/>
            <person name="Terashima Y."/>
            <person name="Suzuki O."/>
            <person name="Nakagawa S."/>
            <person name="Senoh A."/>
            <person name="Mizoguchi H."/>
            <person name="Goto Y."/>
            <person name="Shimizu F."/>
            <person name="Wakebe H."/>
            <person name="Hishigaki H."/>
            <person name="Watanabe T."/>
            <person name="Sugiyama A."/>
            <person name="Takemoto M."/>
            <person name="Kawakami B."/>
            <person name="Yamazaki M."/>
            <person name="Watanabe K."/>
            <person name="Kumagai A."/>
            <person name="Itakura S."/>
            <person name="Fukuzumi Y."/>
            <person name="Fujimori Y."/>
            <person name="Komiyama M."/>
            <person name="Tashiro H."/>
            <person name="Tanigami A."/>
            <person name="Fujiwara T."/>
            <person name="Ono T."/>
            <person name="Yamada K."/>
            <person name="Fujii Y."/>
            <person name="Ozaki K."/>
            <person name="Hirao M."/>
            <person name="Ohmori Y."/>
            <person name="Kawabata A."/>
            <person name="Hikiji T."/>
            <person name="Kobatake N."/>
            <person name="Inagaki H."/>
            <person name="Ikema Y."/>
            <person name="Okamoto S."/>
            <person name="Okitani R."/>
            <person name="Kawakami T."/>
            <person name="Noguchi S."/>
            <person name="Itoh T."/>
            <person name="Shigeta K."/>
            <person name="Senba T."/>
            <person name="Matsumura K."/>
            <person name="Nakajima Y."/>
            <person name="Mizuno T."/>
            <person name="Morinaga M."/>
            <person name="Sasaki M."/>
            <person name="Togashi T."/>
            <person name="Oyama M."/>
            <person name="Hata H."/>
            <person name="Watanabe M."/>
            <person name="Komatsu T."/>
            <person name="Mizushima-Sugano J."/>
            <person name="Satoh T."/>
            <person name="Shirai Y."/>
            <person name="Takahashi Y."/>
            <person name="Nakagawa K."/>
            <person name="Okumura K."/>
            <person name="Nagase T."/>
            <person name="Nomura N."/>
            <person name="Kikuchi H."/>
            <person name="Masuho Y."/>
            <person name="Yamashita R."/>
            <person name="Nakai K."/>
            <person name="Yada T."/>
            <person name="Nakamura Y."/>
            <person name="Ohara O."/>
            <person name="Isogai T."/>
            <person name="Sugano S."/>
        </authorList>
    </citation>
    <scope>NUCLEOTIDE SEQUENCE [LARGE SCALE MRNA]</scope>
    <source>
        <tissue>Skeletal muscle</tissue>
    </source>
</reference>
<reference key="9">
    <citation type="submission" date="2006-01" db="EMBL/GenBank/DDBJ databases">
        <authorList>
            <consortium name="NIEHS SNPs program"/>
        </authorList>
    </citation>
    <scope>NUCLEOTIDE SEQUENCE [GENOMIC DNA]</scope>
</reference>
<reference key="10">
    <citation type="journal article" date="2003" name="Nature">
        <title>The DNA sequence of human chromosome 7.</title>
        <authorList>
            <person name="Hillier L.W."/>
            <person name="Fulton R.S."/>
            <person name="Fulton L.A."/>
            <person name="Graves T.A."/>
            <person name="Pepin K.H."/>
            <person name="Wagner-McPherson C."/>
            <person name="Layman D."/>
            <person name="Maas J."/>
            <person name="Jaeger S."/>
            <person name="Walker R."/>
            <person name="Wylie K."/>
            <person name="Sekhon M."/>
            <person name="Becker M.C."/>
            <person name="O'Laughlin M.D."/>
            <person name="Schaller M.E."/>
            <person name="Fewell G.A."/>
            <person name="Delehaunty K.D."/>
            <person name="Miner T.L."/>
            <person name="Nash W.E."/>
            <person name="Cordes M."/>
            <person name="Du H."/>
            <person name="Sun H."/>
            <person name="Edwards J."/>
            <person name="Bradshaw-Cordum H."/>
            <person name="Ali J."/>
            <person name="Andrews S."/>
            <person name="Isak A."/>
            <person name="Vanbrunt A."/>
            <person name="Nguyen C."/>
            <person name="Du F."/>
            <person name="Lamar B."/>
            <person name="Courtney L."/>
            <person name="Kalicki J."/>
            <person name="Ozersky P."/>
            <person name="Bielicki L."/>
            <person name="Scott K."/>
            <person name="Holmes A."/>
            <person name="Harkins R."/>
            <person name="Harris A."/>
            <person name="Strong C.M."/>
            <person name="Hou S."/>
            <person name="Tomlinson C."/>
            <person name="Dauphin-Kohlberg S."/>
            <person name="Kozlowicz-Reilly A."/>
            <person name="Leonard S."/>
            <person name="Rohlfing T."/>
            <person name="Rock S.M."/>
            <person name="Tin-Wollam A.-M."/>
            <person name="Abbott A."/>
            <person name="Minx P."/>
            <person name="Maupin R."/>
            <person name="Strowmatt C."/>
            <person name="Latreille P."/>
            <person name="Miller N."/>
            <person name="Johnson D."/>
            <person name="Murray J."/>
            <person name="Woessner J.P."/>
            <person name="Wendl M.C."/>
            <person name="Yang S.-P."/>
            <person name="Schultz B.R."/>
            <person name="Wallis J.W."/>
            <person name="Spieth J."/>
            <person name="Bieri T.A."/>
            <person name="Nelson J.O."/>
            <person name="Berkowicz N."/>
            <person name="Wohldmann P.E."/>
            <person name="Cook L.L."/>
            <person name="Hickenbotham M.T."/>
            <person name="Eldred J."/>
            <person name="Williams D."/>
            <person name="Bedell J.A."/>
            <person name="Mardis E.R."/>
            <person name="Clifton S.W."/>
            <person name="Chissoe S.L."/>
            <person name="Marra M.A."/>
            <person name="Raymond C."/>
            <person name="Haugen E."/>
            <person name="Gillett W."/>
            <person name="Zhou Y."/>
            <person name="James R."/>
            <person name="Phelps K."/>
            <person name="Iadanoto S."/>
            <person name="Bubb K."/>
            <person name="Simms E."/>
            <person name="Levy R."/>
            <person name="Clendenning J."/>
            <person name="Kaul R."/>
            <person name="Kent W.J."/>
            <person name="Furey T.S."/>
            <person name="Baertsch R.A."/>
            <person name="Brent M.R."/>
            <person name="Keibler E."/>
            <person name="Flicek P."/>
            <person name="Bork P."/>
            <person name="Suyama M."/>
            <person name="Bailey J.A."/>
            <person name="Portnoy M.E."/>
            <person name="Torrents D."/>
            <person name="Chinwalla A.T."/>
            <person name="Gish W.R."/>
            <person name="Eddy S.R."/>
            <person name="McPherson J.D."/>
            <person name="Olson M.V."/>
            <person name="Eichler E.E."/>
            <person name="Green E.D."/>
            <person name="Waterston R.H."/>
            <person name="Wilson R.K."/>
        </authorList>
    </citation>
    <scope>NUCLEOTIDE SEQUENCE [LARGE SCALE GENOMIC DNA]</scope>
</reference>
<reference key="11">
    <citation type="submission" date="2005-07" db="EMBL/GenBank/DDBJ databases">
        <authorList>
            <person name="Mural R.J."/>
            <person name="Istrail S."/>
            <person name="Sutton G.G."/>
            <person name="Florea L."/>
            <person name="Halpern A.L."/>
            <person name="Mobarry C.M."/>
            <person name="Lippert R."/>
            <person name="Walenz B."/>
            <person name="Shatkay H."/>
            <person name="Dew I."/>
            <person name="Miller J.R."/>
            <person name="Flanigan M.J."/>
            <person name="Edwards N.J."/>
            <person name="Bolanos R."/>
            <person name="Fasulo D."/>
            <person name="Halldorsson B.V."/>
            <person name="Hannenhalli S."/>
            <person name="Turner R."/>
            <person name="Yooseph S."/>
            <person name="Lu F."/>
            <person name="Nusskern D.R."/>
            <person name="Shue B.C."/>
            <person name="Zheng X.H."/>
            <person name="Zhong F."/>
            <person name="Delcher A.L."/>
            <person name="Huson D.H."/>
            <person name="Kravitz S.A."/>
            <person name="Mouchard L."/>
            <person name="Reinert K."/>
            <person name="Remington K.A."/>
            <person name="Clark A.G."/>
            <person name="Waterman M.S."/>
            <person name="Eichler E.E."/>
            <person name="Adams M.D."/>
            <person name="Hunkapiller M.W."/>
            <person name="Myers E.W."/>
            <person name="Venter J.C."/>
        </authorList>
    </citation>
    <scope>NUCLEOTIDE SEQUENCE [LARGE SCALE GENOMIC DNA]</scope>
</reference>
<reference key="12">
    <citation type="journal article" date="2004" name="Genome Res.">
        <title>The status, quality, and expansion of the NIH full-length cDNA project: the Mammalian Gene Collection (MGC).</title>
        <authorList>
            <consortium name="The MGC Project Team"/>
        </authorList>
    </citation>
    <scope>NUCLEOTIDE SEQUENCE [LARGE SCALE MRNA]</scope>
    <source>
        <tissue>Lung</tissue>
        <tissue>Ovary</tissue>
        <tissue>Pancreas</tissue>
        <tissue>Skin</tissue>
        <tissue>Uterus</tissue>
    </source>
</reference>
<reference key="13">
    <citation type="journal article" date="1990" name="J. Clin. Invest.">
        <title>Identification of two related markers for common acute lymphoblastic leukemia as heat shock proteins.</title>
        <authorList>
            <person name="Strahler J.R."/>
            <person name="Kuick R."/>
            <person name="Eckerskorn C."/>
            <person name="Lottspeich F."/>
            <person name="Richardson B.C."/>
            <person name="Fox D.A."/>
            <person name="Stoolman L.M."/>
            <person name="Hanson C.A."/>
            <person name="Nichols D."/>
            <person name="Tueche H.J."/>
            <person name="Hanash S.M."/>
        </authorList>
    </citation>
    <scope>PROTEIN SEQUENCE OF 5-12; 97-112; 141-154 AND 172-188</scope>
</reference>
<reference key="14">
    <citation type="submission" date="2009-03" db="UniProtKB">
        <authorList>
            <person name="Bienvenut W.V."/>
            <person name="Waridel P."/>
            <person name="Quadroni M."/>
        </authorList>
    </citation>
    <scope>PROTEIN SEQUENCE OF 6-37; 57-75; 80-89; 97-127 AND 141-188</scope>
    <scope>PHOSPHORYLATION AT SER-82</scope>
    <scope>IDENTIFICATION BY MASS SPECTROMETRY</scope>
    <source>
        <tissue>Embryonic kidney</tissue>
    </source>
</reference>
<reference key="15">
    <citation type="journal article" date="1993" name="J. Biol. Chem.">
        <title>The 28-kDa protein whose phosphorylation is induced by protein kinase C activators in MCF-7 cells belongs to the family of low molecular mass heat shock proteins and is the estrogen-regulated 24-kDa protein.</title>
        <authorList>
            <person name="Faucher C."/>
            <person name="Capdevielle J."/>
            <person name="Canal I."/>
            <person name="Ferrara P."/>
            <person name="Mazarguil H."/>
            <person name="McGuire W.L."/>
            <person name="Darbon J.-M."/>
        </authorList>
    </citation>
    <scope>PROTEIN SEQUENCE OF 13-20; 38-46; 97-110; 141-154 AND 172-186</scope>
    <scope>PHOSPHORYLATION</scope>
    <scope>INDUCTION BY HEAT SHOCK</scope>
    <source>
        <tissue>Mammary carcinoma</tissue>
    </source>
</reference>
<reference key="16">
    <citation type="journal article" date="1992" name="J. Biol. Chem.">
        <title>Copurification of small heat shock protein with alpha B crystallin from human skeletal muscle.</title>
        <authorList>
            <person name="Kato K."/>
            <person name="Shinohara H."/>
            <person name="Goto S."/>
            <person name="Inaguma Y."/>
            <person name="Morishita R."/>
            <person name="Asano T."/>
        </authorList>
    </citation>
    <scope>PROTEIN SEQUENCE OF 21-59; 93-98; 129-134 AND 178-193</scope>
    <scope>INTERACTION WITH CRYAB</scope>
    <scope>TISSUE SPECIFICITY</scope>
    <source>
        <tissue>Pectoralis muscle</tissue>
    </source>
</reference>
<reference key="17">
    <citation type="journal article" date="1992" name="J. Biol. Chem.">
        <title>Human HSP27 is phosphorylated at serines 78 and 82 by heat shock and mitogen-activated kinases that recognize the same amino acid motif as S6 kinase II.</title>
        <authorList>
            <person name="Landry J."/>
            <person name="Lambert H."/>
            <person name="Zhou M."/>
            <person name="Lavoie J.N."/>
            <person name="Hickey E."/>
            <person name="Weber L.A."/>
            <person name="Anderson C.W."/>
        </authorList>
    </citation>
    <scope>PROTEIN SEQUENCE OF 76-89</scope>
    <scope>PHOSPHORYLATION AT SER-78 AND SER-82</scope>
</reference>
<reference key="18">
    <citation type="journal article" date="1989" name="Cancer Res.">
        <title>Induction of the estrogen-regulated '24K' protein by heat shock.</title>
        <authorList>
            <person name="Fuqua S.A.W."/>
            <person name="Blum-Salingaros M."/>
            <person name="McGuire W.L."/>
        </authorList>
    </citation>
    <scope>NUCLEOTIDE SEQUENCE [MRNA] OF 109-205</scope>
    <scope>INDUCTION BY ESTROGEN</scope>
    <source>
        <tissue>Mammary carcinoma</tissue>
    </source>
</reference>
<reference key="19">
    <citation type="journal article" date="1991" name="Proc. Natl. Acad. Sci. U.S.A.">
        <title>The 29-kDa proteins phosphorylated in thrombin-activated human platelets are forms of the estrogen receptor-related 27-kDa heat shock protein.</title>
        <authorList>
            <person name="Mendelsohn M.E."/>
            <person name="Zhu Y."/>
            <person name="O'Neill S."/>
        </authorList>
    </citation>
    <scope>NUCLEOTIDE SEQUENCE [MRNA] OF 122-205</scope>
</reference>
<reference key="20">
    <citation type="journal article" date="1992" name="FEBS Lett.">
        <title>Identification of MAPKAP kinase 2 as a major enzyme responsible for the phosphorylation of the small mammalian heat shock proteins.</title>
        <authorList>
            <person name="Stokoe D."/>
            <person name="Engel K."/>
            <person name="Campbell D.G."/>
            <person name="Cohen P."/>
            <person name="Gaestel M."/>
        </authorList>
    </citation>
    <scope>PHOSPHORYLATION AT SER-15; SER-78 AND SER-82 BY MAPKAPK2</scope>
</reference>
<reference key="21">
    <citation type="journal article" date="1993" name="J. Biol. Chem.">
        <title>Small heat shock proteins are molecular chaperones.</title>
        <authorList>
            <person name="Jakob U."/>
            <person name="Gaestel M."/>
            <person name="Engel K."/>
            <person name="Buchner J."/>
        </authorList>
    </citation>
    <scope>PHOSPHORYLATION BY MAPKAPK2</scope>
</reference>
<reference key="22">
    <citation type="journal article" date="1996" name="FEBS Lett.">
        <title>A comparison of the substrate specificity of MAPKAP kinase-2 and MAPKAP kinase-3 and their activation by cytokines and cellular stress.</title>
        <authorList>
            <person name="Clifton A.D."/>
            <person name="Young P.R."/>
            <person name="Cohen P."/>
        </authorList>
    </citation>
    <scope>PHOSPHORYLATION AT SER-15; SER-78 AND SER-82</scope>
</reference>
<reference key="23">
    <citation type="journal article" date="1999" name="J. Biol. Chem.">
        <title>Regulation of Hsp27 oligomerization, chaperone function, and protective activity against oxidative stress/tumor necrosis factor alpha by phosphorylation.</title>
        <authorList>
            <person name="Rogalla T."/>
            <person name="Ehrnsperger M."/>
            <person name="Preville X."/>
            <person name="Kotlyarov A."/>
            <person name="Lutsch G."/>
            <person name="Ducasse C."/>
            <person name="Paul C."/>
            <person name="Wieske M."/>
            <person name="Arrigo A.P."/>
            <person name="Buchner J."/>
            <person name="Gaestel M."/>
        </authorList>
    </citation>
    <scope>FUNCTION</scope>
    <scope>SUBUNIT</scope>
    <scope>PHOSPHORYLATION AT SER-15; SER-78 AND SER-82</scope>
    <scope>MUTAGENESIS OF SER-15; SER-78 AND SER-82</scope>
</reference>
<reference key="24">
    <citation type="journal article" date="2000" name="J. Biol. Chem.">
        <title>Identification and characterization of a novel protein from Sertoli cells, PASS1, that associates with mammalian small stress protein hsp27.</title>
        <authorList>
            <person name="Liu C."/>
            <person name="Gilmont R.R."/>
            <person name="Benndorf R."/>
            <person name="Welsh M.J."/>
        </authorList>
    </citation>
    <scope>INTERACTION WITH HSPBAP1</scope>
</reference>
<reference key="25">
    <citation type="journal article" date="2001" name="J. Biol. Chem.">
        <title>HSP22, a new member of the small heat shock protein superfamily, interacts with mimic of phosphorylated HSP27 (3DHSP27).</title>
        <authorList>
            <person name="Benndorf R."/>
            <person name="Sun X."/>
            <person name="Gilmont R.R."/>
            <person name="Biederman K.J."/>
            <person name="Molloy M.P."/>
            <person name="Goodmurphy C.W."/>
            <person name="Cheng H."/>
            <person name="Andrews P.C."/>
            <person name="Welsh M.J."/>
        </authorList>
    </citation>
    <scope>INTERACTION WITH HSPB8</scope>
</reference>
<reference key="26">
    <citation type="journal article" date="2005" name="Circ. Res.">
        <title>Heat shock protein 27 is associated with freedom from graft vasculopathy after human cardiac transplantation.</title>
        <authorList>
            <person name="De Souza A.I."/>
            <person name="Wait R."/>
            <person name="Mitchell A.G."/>
            <person name="Banner N.R."/>
            <person name="Dunn M.J."/>
            <person name="Rose M.L."/>
        </authorList>
    </citation>
    <scope>PHOSPHORYLATION AT SER-78 AND SER-82</scope>
    <scope>IDENTIFICATION BY MASS SPECTROMETRY</scope>
</reference>
<reference key="27">
    <citation type="journal article" date="2006" name="Cell">
        <title>Global, in vivo, and site-specific phosphorylation dynamics in signaling networks.</title>
        <authorList>
            <person name="Olsen J.V."/>
            <person name="Blagoev B."/>
            <person name="Gnad F."/>
            <person name="Macek B."/>
            <person name="Kumar C."/>
            <person name="Mortensen P."/>
            <person name="Mann M."/>
        </authorList>
    </citation>
    <scope>PHOSPHORYLATION [LARGE SCALE ANALYSIS] AT SER-15 AND SER-65</scope>
    <scope>IDENTIFICATION BY MASS SPECTROMETRY [LARGE SCALE ANALYSIS]</scope>
    <source>
        <tissue>Cervix carcinoma</tissue>
    </source>
</reference>
<reference key="28">
    <citation type="journal article" date="2006" name="Cell. Microbiol.">
        <title>Transcriptomic and proteomic analyses of rhabdomyosarcoma cells reveal differential cellular gene expression in response to enterovirus 71 infection.</title>
        <authorList>
            <person name="Leong W.F."/>
            <person name="Chow V.T."/>
        </authorList>
    </citation>
    <scope>INDUCTION (MICROBIAL INFECTION)</scope>
    <scope>IDENTIFICATION BY MASS SPECTROMETRY</scope>
</reference>
<reference key="29">
    <citation type="journal article" date="2006" name="Nat. Biotechnol.">
        <title>A probability-based approach for high-throughput protein phosphorylation analysis and site localization.</title>
        <authorList>
            <person name="Beausoleil S.A."/>
            <person name="Villen J."/>
            <person name="Gerber S.A."/>
            <person name="Rush J."/>
            <person name="Gygi S.P."/>
        </authorList>
    </citation>
    <scope>PHOSPHORYLATION [LARGE SCALE ANALYSIS] AT SER-82 AND SER-83</scope>
    <scope>IDENTIFICATION BY MASS SPECTROMETRY [LARGE SCALE ANALYSIS]</scope>
    <source>
        <tissue>Cervix carcinoma</tissue>
    </source>
</reference>
<reference key="30">
    <citation type="journal article" date="2007" name="J. Proteome Res.">
        <title>Improved titanium dioxide enrichment of phosphopeptides from HeLa cells and high confident phosphopeptide identification by cross-validation of MS/MS and MS/MS/MS spectra.</title>
        <authorList>
            <person name="Yu L.R."/>
            <person name="Zhu Z."/>
            <person name="Chan K.C."/>
            <person name="Issaq H.J."/>
            <person name="Dimitrov D.S."/>
            <person name="Veenstra T.D."/>
        </authorList>
    </citation>
    <scope>IDENTIFICATION BY MASS SPECTROMETRY [LARGE SCALE ANALYSIS]</scope>
    <source>
        <tissue>Cervix carcinoma</tissue>
    </source>
</reference>
<reference key="31">
    <citation type="journal article" date="2008" name="J. Proteome Res.">
        <title>Phosphoproteome of resting human platelets.</title>
        <authorList>
            <person name="Zahedi R.P."/>
            <person name="Lewandrowski U."/>
            <person name="Wiesner J."/>
            <person name="Wortelkamp S."/>
            <person name="Moebius J."/>
            <person name="Schuetz C."/>
            <person name="Walter U."/>
            <person name="Gambaryan S."/>
            <person name="Sickmann A."/>
        </authorList>
    </citation>
    <scope>PHOSPHORYLATION [LARGE SCALE ANALYSIS] AT SER-15</scope>
    <scope>IDENTIFICATION BY MASS SPECTROMETRY [LARGE SCALE ANALYSIS]</scope>
    <source>
        <tissue>Platelet</tissue>
    </source>
</reference>
<reference key="32">
    <citation type="journal article" date="2008" name="Mol. Cell">
        <title>Kinase-selective enrichment enables quantitative phosphoproteomics of the kinome across the cell cycle.</title>
        <authorList>
            <person name="Daub H."/>
            <person name="Olsen J.V."/>
            <person name="Bairlein M."/>
            <person name="Gnad F."/>
            <person name="Oppermann F.S."/>
            <person name="Korner R."/>
            <person name="Greff Z."/>
            <person name="Keri G."/>
            <person name="Stemmann O."/>
            <person name="Mann M."/>
        </authorList>
    </citation>
    <scope>PHOSPHORYLATION [LARGE SCALE ANALYSIS] AT SER-15 AND SER-199</scope>
    <scope>IDENTIFICATION BY MASS SPECTROMETRY [LARGE SCALE ANALYSIS]</scope>
    <source>
        <tissue>Cervix carcinoma</tissue>
    </source>
</reference>
<reference key="33">
    <citation type="journal article" date="2008" name="Proc. Natl. Acad. Sci. U.S.A.">
        <title>A quantitative atlas of mitotic phosphorylation.</title>
        <authorList>
            <person name="Dephoure N."/>
            <person name="Zhou C."/>
            <person name="Villen J."/>
            <person name="Beausoleil S.A."/>
            <person name="Bakalarski C.E."/>
            <person name="Elledge S.J."/>
            <person name="Gygi S.P."/>
        </authorList>
    </citation>
    <scope>PHOSPHORYLATION [LARGE SCALE ANALYSIS] AT SER-82 AND SER-199</scope>
    <scope>IDENTIFICATION BY MASS SPECTROMETRY [LARGE SCALE ANALYSIS]</scope>
    <source>
        <tissue>Cervix carcinoma</tissue>
    </source>
</reference>
<reference key="34">
    <citation type="journal article" date="2009" name="Biochim. Biophys. Acta">
        <title>HSPB7 is a SC35 speckle resident small heat shock protein.</title>
        <authorList>
            <person name="Vos M.J."/>
            <person name="Kanon B."/>
            <person name="Kampinga H.H."/>
        </authorList>
    </citation>
    <scope>SUBCELLULAR LOCATION</scope>
</reference>
<reference key="35">
    <citation type="journal article" date="2009" name="Cell. Signal.">
        <title>PKA-induced F-actin rearrangement requires phosphorylation of Hsp27 by the MAPKAP kinase MK5.</title>
        <authorList>
            <person name="Kostenko S."/>
            <person name="Johannessen M."/>
            <person name="Moens U."/>
        </authorList>
    </citation>
    <scope>FUNCTION</scope>
    <scope>PHOSPHORYLATION AT SER-78 AND SER-82</scope>
</reference>
<reference key="36">
    <citation type="journal article" date="2009" name="Mol. Cell. Proteomics">
        <title>Large-scale proteomics analysis of the human kinome.</title>
        <authorList>
            <person name="Oppermann F.S."/>
            <person name="Gnad F."/>
            <person name="Olsen J.V."/>
            <person name="Hornberger R."/>
            <person name="Greff Z."/>
            <person name="Keri G."/>
            <person name="Mann M."/>
            <person name="Daub H."/>
        </authorList>
    </citation>
    <scope>IDENTIFICATION BY MASS SPECTROMETRY [LARGE SCALE ANALYSIS]</scope>
</reference>
<reference key="37">
    <citation type="journal article" date="2009" name="Science">
        <title>Lysine acetylation targets protein complexes and co-regulates major cellular functions.</title>
        <authorList>
            <person name="Choudhary C."/>
            <person name="Kumar C."/>
            <person name="Gnad F."/>
            <person name="Nielsen M.L."/>
            <person name="Rehman M."/>
            <person name="Walther T.C."/>
            <person name="Olsen J.V."/>
            <person name="Mann M."/>
        </authorList>
    </citation>
    <scope>ACETYLATION [LARGE SCALE ANALYSIS] AT LYS-123</scope>
    <scope>IDENTIFICATION BY MASS SPECTROMETRY [LARGE SCALE ANALYSIS]</scope>
</reference>
<reference key="38">
    <citation type="journal article" date="2010" name="Sci. Signal.">
        <title>Quantitative phosphoproteomics reveals widespread full phosphorylation site occupancy during mitosis.</title>
        <authorList>
            <person name="Olsen J.V."/>
            <person name="Vermeulen M."/>
            <person name="Santamaria A."/>
            <person name="Kumar C."/>
            <person name="Miller M.L."/>
            <person name="Jensen L.J."/>
            <person name="Gnad F."/>
            <person name="Cox J."/>
            <person name="Jensen T.S."/>
            <person name="Nigg E.A."/>
            <person name="Brunak S."/>
            <person name="Mann M."/>
        </authorList>
    </citation>
    <scope>PHOSPHORYLATION [LARGE SCALE ANALYSIS] AT SER-15; SER-65; SER-78; SER-82 AND SER-199</scope>
    <scope>IDENTIFICATION BY MASS SPECTROMETRY [LARGE SCALE ANALYSIS]</scope>
    <source>
        <tissue>Cervix carcinoma</tissue>
    </source>
</reference>
<reference key="39">
    <citation type="journal article" date="2011" name="BMC Syst. Biol.">
        <title>Initial characterization of the human central proteome.</title>
        <authorList>
            <person name="Burkard T.R."/>
            <person name="Planyavsky M."/>
            <person name="Kaupe I."/>
            <person name="Breitwieser F.P."/>
            <person name="Buerckstuemmer T."/>
            <person name="Bennett K.L."/>
            <person name="Superti-Furga G."/>
            <person name="Colinge J."/>
        </authorList>
    </citation>
    <scope>IDENTIFICATION BY MASS SPECTROMETRY [LARGE SCALE ANALYSIS]</scope>
</reference>
<reference key="40">
    <citation type="journal article" date="2011" name="Sci. Signal.">
        <title>System-wide temporal characterization of the proteome and phosphoproteome of human embryonic stem cell differentiation.</title>
        <authorList>
            <person name="Rigbolt K.T."/>
            <person name="Prokhorova T.A."/>
            <person name="Akimov V."/>
            <person name="Henningsen J."/>
            <person name="Johansen P.T."/>
            <person name="Kratchmarova I."/>
            <person name="Kassem M."/>
            <person name="Mann M."/>
            <person name="Olsen J.V."/>
            <person name="Blagoev B."/>
        </authorList>
    </citation>
    <scope>IDENTIFICATION BY MASS SPECTROMETRY [LARGE SCALE ANALYSIS]</scope>
</reference>
<reference key="41">
    <citation type="journal article" date="2013" name="J. Proteome Res.">
        <title>Toward a comprehensive characterization of a human cancer cell phosphoproteome.</title>
        <authorList>
            <person name="Zhou H."/>
            <person name="Di Palma S."/>
            <person name="Preisinger C."/>
            <person name="Peng M."/>
            <person name="Polat A.N."/>
            <person name="Heck A.J."/>
            <person name="Mohammed S."/>
        </authorList>
    </citation>
    <scope>PHOSPHORYLATION [LARGE SCALE ANALYSIS] AT SER-15; SER-78; SER-82; SER-86; THR-174; SER-176 AND SER-199</scope>
    <scope>IDENTIFICATION BY MASS SPECTROMETRY [LARGE SCALE ANALYSIS]</scope>
    <source>
        <tissue>Cervix carcinoma</tissue>
        <tissue>Erythroleukemia</tissue>
    </source>
</reference>
<reference key="42">
    <citation type="journal article" date="2014" name="J. Proteomics">
        <title>An enzyme assisted RP-RPLC approach for in-depth analysis of human liver phosphoproteome.</title>
        <authorList>
            <person name="Bian Y."/>
            <person name="Song C."/>
            <person name="Cheng K."/>
            <person name="Dong M."/>
            <person name="Wang F."/>
            <person name="Huang J."/>
            <person name="Sun D."/>
            <person name="Wang L."/>
            <person name="Ye M."/>
            <person name="Zou H."/>
        </authorList>
    </citation>
    <scope>PHOSPHORYLATION [LARGE SCALE ANALYSIS] AT SER-15; SER-78; SER-82; SER-86; SER-98 AND SER-199</scope>
    <scope>IDENTIFICATION BY MASS SPECTROMETRY [LARGE SCALE ANALYSIS]</scope>
    <source>
        <tissue>Liver</tissue>
    </source>
</reference>
<reference key="43">
    <citation type="journal article" date="2014" name="Mol. Cell. Proteomics">
        <title>Immunoaffinity enrichment and mass spectrometry analysis of protein methylation.</title>
        <authorList>
            <person name="Guo A."/>
            <person name="Gu H."/>
            <person name="Zhou J."/>
            <person name="Mulhern D."/>
            <person name="Wang Y."/>
            <person name="Lee K.A."/>
            <person name="Yang V."/>
            <person name="Aguiar M."/>
            <person name="Kornhauser J."/>
            <person name="Jia X."/>
            <person name="Ren J."/>
            <person name="Beausoleil S.A."/>
            <person name="Silva J.C."/>
            <person name="Vemulapalli V."/>
            <person name="Bedford M.T."/>
            <person name="Comb M.J."/>
        </authorList>
    </citation>
    <scope>METHYLATION [LARGE SCALE ANALYSIS] AT ARG-12</scope>
    <scope>IDENTIFICATION BY MASS SPECTROMETRY [LARGE SCALE ANALYSIS]</scope>
    <source>
        <tissue>Colon carcinoma</tissue>
    </source>
</reference>
<reference key="44">
    <citation type="journal article" date="2015" name="Proteomics">
        <title>N-terminome analysis of the human mitochondrial proteome.</title>
        <authorList>
            <person name="Vaca Jacome A.S."/>
            <person name="Rabilloud T."/>
            <person name="Schaeffer-Reiss C."/>
            <person name="Rompais M."/>
            <person name="Ayoub D."/>
            <person name="Lane L."/>
            <person name="Bairoch A."/>
            <person name="Van Dorsselaer A."/>
            <person name="Carapito C."/>
        </authorList>
    </citation>
    <scope>IDENTIFICATION BY MASS SPECTROMETRY [LARGE SCALE ANALYSIS]</scope>
</reference>
<reference key="45">
    <citation type="journal article" date="2004" name="Nat. Genet.">
        <title>Mutant small heat-shock protein 27 causes axonal Charcot-Marie-Tooth disease and distal hereditary motor neuropathy.</title>
        <authorList>
            <person name="Evgrafov O.V."/>
            <person name="Mersiyanova I."/>
            <person name="Irobi J."/>
            <person name="Van Den Bosch L."/>
            <person name="Dierick I."/>
            <person name="Leung C.L."/>
            <person name="Schagina O."/>
            <person name="Verpoorten N."/>
            <person name="Van Impe K."/>
            <person name="Fedotov V."/>
            <person name="Dadali E."/>
            <person name="Auer-Grumbach M."/>
            <person name="Windpassinger C."/>
            <person name="Wagner K."/>
            <person name="Mitrovic Z."/>
            <person name="Hilton-Jones D."/>
            <person name="Talbot K."/>
            <person name="Martin J.-J."/>
            <person name="Vasserman N."/>
            <person name="Tverskaya S."/>
            <person name="Polyakov A."/>
            <person name="Liem R.K.H."/>
            <person name="Gettemans J."/>
            <person name="Robberecht W."/>
            <person name="De Jonghe P."/>
            <person name="Timmerman V."/>
        </authorList>
    </citation>
    <scope>VARIANTS CMT2F PHE-135 AND TRP-136</scope>
    <scope>VARIANTS HMND3 TRP-127; PHE-135; ILE-151 AND LEU-182</scope>
</reference>
<reference key="46">
    <citation type="journal article" date="2008" name="Neurology">
        <title>Mutations in the HSP27 (HSPB1) gene cause dominant, recessive, and sporadic distal HMN/CMT type 2.</title>
        <authorList>
            <person name="Houlden H."/>
            <person name="Laura M."/>
            <person name="Wavrant-De Vrieze F."/>
            <person name="Blake J."/>
            <person name="Wood N."/>
            <person name="Reilly M.M."/>
        </authorList>
    </citation>
    <scope>VARIANTS HMND3 LEU-39; ARG-84; MET-99; PHE-135 AND GLY-140</scope>
</reference>
<reference key="47">
    <citation type="journal article" date="2009" name="J. Neurol. Sci.">
        <title>A clinical phenotype of distal hereditary motor neuronopathy type II with a novel HSPB1 mutation.</title>
        <authorList>
            <person name="Ikeda Y."/>
            <person name="Abe A."/>
            <person name="Ishida C."/>
            <person name="Takahashi K."/>
            <person name="Hayasaka K."/>
            <person name="Yamada M."/>
        </authorList>
    </citation>
    <scope>VARIANT HMND3 GLN-141</scope>
</reference>
<reference key="48">
    <citation type="journal article" date="2010" name="J. Biol. Chem.">
        <title>Increased monomerization of mutant HSPB1 leads to protein hyperactivity in Charcot-Marie-Tooth neuropathy.</title>
        <authorList>
            <person name="Almeida-Souza L."/>
            <person name="Goethals S."/>
            <person name="de Winter V."/>
            <person name="Dierick I."/>
            <person name="Gallardo R."/>
            <person name="Van Durme J."/>
            <person name="Irobi J."/>
            <person name="Gettemans J."/>
            <person name="Rousseau F."/>
            <person name="Schymkowitz J."/>
            <person name="Timmerman V."/>
            <person name="Janssens S."/>
        </authorList>
    </citation>
    <scope>VARIANT TYR-156</scope>
    <scope>CHARACTERIZATION OF VARIANT TYR-156</scope>
    <scope>CHARACTERIZATION OF VARIANTS HMND3 TRP-127; PHE-135; ILE-151 AND LEU-182</scope>
    <scope>CHARACTERIZATION OF VARIANT CMT2F TRP-136</scope>
    <scope>FUNCTION</scope>
    <scope>SUBUNIT</scope>
</reference>
<reference key="49">
    <citation type="journal article" date="2010" name="J. Neurol. Sci.">
        <title>A novel HSPB1 mutation in an Italian patient with CMT2/dHMN phenotype.</title>
        <authorList>
            <person name="Luigetti M."/>
            <person name="Fabrizi G.M."/>
            <person name="Madia F."/>
            <person name="Ferrarini M."/>
            <person name="Conte A."/>
            <person name="Del Grande A."/>
            <person name="Tasca G."/>
            <person name="Tonali P.A."/>
            <person name="Sabatelli M."/>
        </authorList>
    </citation>
    <scope>VARIANT HMND3 ILE-180</scope>
</reference>
<reference key="50">
    <citation type="journal article" date="2011" name="J. Peripher. Nerv. Syst.">
        <title>HSPB1 and HSPB8 in inherited neuropathies: study of an Italian cohort of dHMN and CMT2 patients.</title>
        <authorList>
            <person name="Capponi S."/>
            <person name="Geroldi A."/>
            <person name="Fossa P."/>
            <person name="Grandis M."/>
            <person name="Ciotti P."/>
            <person name="Gulli R."/>
            <person name="Schenone A."/>
            <person name="Mandich P."/>
            <person name="Bellone E."/>
        </authorList>
    </citation>
    <scope>VARIANTS HMND3 ARG-34; LYS-41; LEU-136 AND ILE-180</scope>
    <scope>VARIANTS CMT2F LEU-39; LEU-136 AND TRP-188</scope>
</reference>
<reference key="51">
    <citation type="journal article" date="2011" name="PLoS ONE">
        <title>The mutational spectrum in a cohort of Charcot-Marie-Tooth disease type 2 among the Han Chinese in Taiwan.</title>
        <authorList>
            <person name="Lin K.P."/>
            <person name="Soong B.W."/>
            <person name="Yang C.C."/>
            <person name="Huang L.W."/>
            <person name="Chang M.H."/>
            <person name="Lee I.H."/>
            <person name="Antonellis A."/>
            <person name="Lee Y.C."/>
        </authorList>
    </citation>
    <scope>VARIANT CMT2F ALA-164</scope>
</reference>
<reference key="52">
    <citation type="journal article" date="2013" name="Acta Neuropathol.">
        <title>Charcot-Marie-Tooth causing HSPB1 mutations increase Cdk5-mediated phosphorylation of neurofilaments.</title>
        <authorList>
            <person name="Holmgren A."/>
            <person name="Bouhy D."/>
            <person name="De Winter V."/>
            <person name="Asselbergh B."/>
            <person name="Timmermans J.P."/>
            <person name="Irobi J."/>
            <person name="Timmerman V."/>
        </authorList>
    </citation>
    <scope>FUNCTION</scope>
    <scope>CHARACTERIZATION OF VARIANTS HMND3 TRP-127 AND LEU-182</scope>
    <scope>CHARACTERIZATION OF VARIANT CMT2F PHE-135</scope>
</reference>
<reference key="53">
    <citation type="journal article" date="2013" name="Arch. Biochem. Biophys.">
        <title>Structure and properties of G84R and L99M mutants of human small heat shock protein HspB1 correlating with motor neuropathy.</title>
        <authorList>
            <person name="Nefedova V.V."/>
            <person name="Sudnitsyna M.V."/>
            <person name="Strelkov S.V."/>
            <person name="Gusev N.B."/>
        </authorList>
    </citation>
    <scope>CHARACTERIZATION OF VARIANTS HMND3 ARG-84 AND MET-99</scope>
    <scope>INTERACTION WITH HSPB6</scope>
</reference>
<reference key="54">
    <citation type="journal article" date="2013" name="Biochimie">
        <title>Physico-chemical properties of R140G and K141Q mutants of human small heat shock protein HspB1 associated with hereditary peripheral neuropathies.</title>
        <authorList>
            <person name="Nefedova V.V."/>
            <person name="Datskevich P.N."/>
            <person name="Sudnitsyna M.V."/>
            <person name="Strelkov S.V."/>
            <person name="Gusev N.B."/>
        </authorList>
    </citation>
    <scope>CHARACTERIZATION OF VARIANTS HMND3 GLY-140 AND GLN-141</scope>
</reference>
<reference key="55">
    <citation type="journal article" date="2015" name="PLoS ONE">
        <title>Characterization of mutants of human small heat shock protein HspB1 carrying replacements in the n-terminal domain and associated with hereditary motor neuron diseases.</title>
        <authorList>
            <person name="Muranova L.K."/>
            <person name="Weeks S.D."/>
            <person name="Strelkov S.V."/>
            <person name="Gusev N.B."/>
        </authorList>
    </citation>
    <scope>CHARACTERIZATION OF VARIANTS HMND3 ARG-34; LEU-39 AND LYS-41</scope>
</reference>
<reference key="56">
    <citation type="journal article" date="2016" name="Hum. Mutat.">
        <title>Molecular chaperones in the pathogenesis of amyotrophic lateral sclerosis: the role of HSPB1.</title>
        <authorList>
            <person name="Capponi S."/>
            <person name="Geuens T."/>
            <person name="Geroldi A."/>
            <person name="Origone P."/>
            <person name="Verdiani S."/>
            <person name="Cichero E."/>
            <person name="Adriaenssens E."/>
            <person name="De Winter V."/>
            <person name="Bandettini di Poggio M."/>
            <person name="Barberis M."/>
            <person name="Chio A."/>
            <person name="Fossa P."/>
            <person name="Mandich P."/>
            <person name="Bellone E."/>
            <person name="Timmerman V."/>
        </authorList>
    </citation>
    <scope>VARIANT HIS-190</scope>
</reference>
<reference key="57">
    <citation type="journal article" date="2017" name="Hum. Mutat.">
        <title>Axonal Neuropathies due to Mutations in Small Heat Shock Proteins: Clinical, Genetic, and Functional Insights into Novel Mutations.</title>
        <authorList>
            <person name="Echaniz-Laguna A."/>
            <person name="Geuens T."/>
            <person name="Petiot P."/>
            <person name="Pereon Y."/>
            <person name="Adriaenssens E."/>
            <person name="Haidar M."/>
            <person name="Capponi S."/>
            <person name="Maisonobe T."/>
            <person name="Fournier E."/>
            <person name="Dubourg O."/>
            <person name="Degos B."/>
            <person name="Salachas F."/>
            <person name="Lenglet T."/>
            <person name="Eymard B."/>
            <person name="Delmont E."/>
            <person name="Pouget J."/>
            <person name="Juntas Morales R."/>
            <person name="Goizet C."/>
            <person name="Latour P."/>
            <person name="Timmerman V."/>
            <person name="Stojkovic T."/>
        </authorList>
    </citation>
    <scope>VARIANTS HMND3 SER-7; LEU-39; ASP-53; TRP-127; ARG-128; ILE-151; 175-GLN--LYS-205 DEL; ILE-180 AND LEU-187</scope>
    <scope>SUBCELLULAR LOCATION</scope>
    <scope>CHARACTERIZATION OF VARIANTS HMND3 SER-7; ASP-53; ARG-128 AND LEU-187</scope>
</reference>
<protein>
    <recommendedName>
        <fullName>Heat shock protein beta-1</fullName>
        <shortName>HspB1</shortName>
    </recommendedName>
    <alternativeName>
        <fullName>28 kDa heat shock protein</fullName>
    </alternativeName>
    <alternativeName>
        <fullName>Estrogen-regulated 24 kDa protein</fullName>
    </alternativeName>
    <alternativeName>
        <fullName>Heat shock 27 kDa protein</fullName>
        <shortName>HSP 27</shortName>
    </alternativeName>
    <alternativeName>
        <fullName>Heat shock protein family B member 1</fullName>
    </alternativeName>
    <alternativeName>
        <fullName>Stress-responsive protein 27</fullName>
        <shortName>SRP27</shortName>
    </alternativeName>
</protein>
<accession>P04792</accession>
<accession>B2R4N8</accession>
<accession>Q6FI47</accession>
<accession>Q96C20</accession>
<accession>Q96EI7</accession>
<accession>Q9UC31</accession>
<accession>Q9UC34</accession>
<accession>Q9UC35</accession>
<accession>Q9UC36</accession>